<feature type="chain" id="PRO_0000212342" description="Protein arginine N-methyltransferase 5">
    <location>
        <begin position="1"/>
        <end position="637"/>
    </location>
</feature>
<feature type="initiator methionine" description="Removed; alternate" evidence="9 33 39 40 41">
    <location>
        <position position="1"/>
    </location>
</feature>
<feature type="chain" id="PRO_0000417602" description="Protein arginine N-methyltransferase 5, N-terminally processed">
    <location>
        <begin position="2"/>
        <end position="637"/>
    </location>
</feature>
<feature type="domain" description="SAM-dependent MTase PRMT-type" evidence="3">
    <location>
        <begin position="308"/>
        <end position="615"/>
    </location>
</feature>
<feature type="region of interest" description="TIM barrel" evidence="27">
    <location>
        <begin position="13"/>
        <end position="292"/>
    </location>
</feature>
<feature type="region of interest" description="Beta barrel" evidence="27">
    <location>
        <begin position="465"/>
        <end position="637"/>
    </location>
</feature>
<feature type="region of interest" description="Dimerization" evidence="27">
    <location>
        <begin position="488"/>
        <end position="494"/>
    </location>
</feature>
<feature type="active site" description="Proton donor/acceptor" evidence="37">
    <location>
        <position position="435"/>
    </location>
</feature>
<feature type="active site" description="Proton donor/acceptor" evidence="37">
    <location>
        <position position="444"/>
    </location>
</feature>
<feature type="binding site" evidence="27">
    <location>
        <position position="324"/>
    </location>
    <ligand>
        <name>S-adenosyl-L-methionine</name>
        <dbReference type="ChEBI" id="CHEBI:59789"/>
    </ligand>
</feature>
<feature type="binding site" evidence="27">
    <location>
        <position position="327"/>
    </location>
    <ligand>
        <name>a protein</name>
        <dbReference type="ChEBI" id="CHEBI:16541"/>
        <note>substrate</note>
    </ligand>
    <ligandPart>
        <name>L-arginine residue</name>
        <dbReference type="ChEBI" id="CHEBI:29965"/>
    </ligandPart>
</feature>
<feature type="binding site" evidence="27">
    <location>
        <begin position="333"/>
        <end position="334"/>
    </location>
    <ligand>
        <name>S-adenosyl-L-methionine</name>
        <dbReference type="ChEBI" id="CHEBI:59789"/>
    </ligand>
</feature>
<feature type="binding site" evidence="27">
    <location>
        <position position="392"/>
    </location>
    <ligand>
        <name>S-adenosyl-L-methionine</name>
        <dbReference type="ChEBI" id="CHEBI:59789"/>
    </ligand>
</feature>
<feature type="binding site" evidence="27">
    <location>
        <begin position="419"/>
        <end position="420"/>
    </location>
    <ligand>
        <name>S-adenosyl-L-methionine</name>
        <dbReference type="ChEBI" id="CHEBI:59789"/>
    </ligand>
</feature>
<feature type="binding site" evidence="27">
    <location>
        <position position="435"/>
    </location>
    <ligand>
        <name>a protein</name>
        <dbReference type="ChEBI" id="CHEBI:16541"/>
        <note>substrate</note>
    </ligand>
    <ligandPart>
        <name>L-arginine residue</name>
        <dbReference type="ChEBI" id="CHEBI:29965"/>
    </ligandPart>
</feature>
<feature type="binding site" evidence="27">
    <location>
        <position position="444"/>
    </location>
    <ligand>
        <name>a protein</name>
        <dbReference type="ChEBI" id="CHEBI:16541"/>
        <note>substrate</note>
    </ligand>
    <ligandPart>
        <name>L-arginine residue</name>
        <dbReference type="ChEBI" id="CHEBI:29965"/>
    </ligandPart>
</feature>
<feature type="site" description="Critical for specifying symmetric addition of methyl groups" evidence="1">
    <location>
        <position position="327"/>
    </location>
</feature>
<feature type="modified residue" description="N-acetylalanine; in Protein arginine N-methyltransferase 5, N-terminally processed" evidence="33 39 40 41">
    <location>
        <position position="2"/>
    </location>
</feature>
<feature type="splice variant" id="VSP_043382" description="In isoform 2, isoform 3 and isoform 4." evidence="34 35">
    <original>MAAMAVGGAGGSRVSSGRDLNCVPEIADTLGAVA</original>
    <variation>MRGPNSGTEKGRLVIPE</variation>
    <location>
        <begin position="1"/>
        <end position="34"/>
    </location>
</feature>
<feature type="splice variant" id="VSP_054685" description="In isoform 3 and isoform 5." evidence="34">
    <location>
        <begin position="77"/>
        <end position="120"/>
    </location>
</feature>
<feature type="splice variant" id="VSP_054768" description="In isoform 4." evidence="35">
    <location>
        <begin position="106"/>
        <end position="259"/>
    </location>
</feature>
<feature type="mutagenesis site" description="Increased MAPK1/MAPK3 phosphorylation in response to EGF." evidence="25">
    <location>
        <begin position="365"/>
        <end position="369"/>
    </location>
</feature>
<feature type="mutagenesis site" description="Abolishes enzymatic activity." evidence="11">
    <original>GR</original>
    <variation>AA</variation>
    <location>
        <begin position="367"/>
        <end position="368"/>
    </location>
</feature>
<feature type="sequence conflict" description="In Ref. 4; BAG63592." evidence="36" ref="4">
    <original>E</original>
    <variation>K</variation>
    <location>
        <position position="183"/>
    </location>
</feature>
<feature type="sequence conflict" description="In Ref. 2; AAB66581." evidence="36" ref="2">
    <original>S</original>
    <variation>F</variation>
    <location>
        <position position="247"/>
    </location>
</feature>
<feature type="sequence conflict" description="In Ref. 4; BAG63592." evidence="36" ref="4">
    <original>M</original>
    <variation>T</variation>
    <location>
        <position position="420"/>
    </location>
</feature>
<feature type="sequence conflict" description="In Ref. 2; AAB66581." evidence="36" ref="2">
    <original>G</original>
    <variation>V</variation>
    <location>
        <position position="553"/>
    </location>
</feature>
<feature type="strand" evidence="48">
    <location>
        <begin position="16"/>
        <end position="19"/>
    </location>
</feature>
<feature type="helix" evidence="48">
    <location>
        <begin position="26"/>
        <end position="35"/>
    </location>
</feature>
<feature type="strand" evidence="48">
    <location>
        <begin position="39"/>
        <end position="46"/>
    </location>
</feature>
<feature type="strand" evidence="48">
    <location>
        <begin position="54"/>
        <end position="56"/>
    </location>
</feature>
<feature type="helix" evidence="48">
    <location>
        <begin position="59"/>
        <end position="61"/>
    </location>
</feature>
<feature type="helix" evidence="48">
    <location>
        <begin position="70"/>
        <end position="72"/>
    </location>
</feature>
<feature type="helix" evidence="48">
    <location>
        <begin position="75"/>
        <end position="81"/>
    </location>
</feature>
<feature type="strand" evidence="48">
    <location>
        <begin position="82"/>
        <end position="85"/>
    </location>
</feature>
<feature type="helix" evidence="48">
    <location>
        <begin position="97"/>
        <end position="117"/>
    </location>
</feature>
<feature type="strand" evidence="48">
    <location>
        <begin position="120"/>
        <end position="125"/>
    </location>
</feature>
<feature type="helix" evidence="48">
    <location>
        <begin position="132"/>
        <end position="142"/>
    </location>
</feature>
<feature type="turn" evidence="55">
    <location>
        <begin position="143"/>
        <end position="145"/>
    </location>
</feature>
<feature type="strand" evidence="48">
    <location>
        <begin position="150"/>
        <end position="158"/>
    </location>
</feature>
<feature type="helix" evidence="48">
    <location>
        <begin position="160"/>
        <end position="162"/>
    </location>
</feature>
<feature type="strand" evidence="50">
    <location>
        <begin position="168"/>
        <end position="171"/>
    </location>
</feature>
<feature type="helix" evidence="48">
    <location>
        <begin position="181"/>
        <end position="183"/>
    </location>
</feature>
<feature type="helix" evidence="48">
    <location>
        <begin position="184"/>
        <end position="195"/>
    </location>
</feature>
<feature type="turn" evidence="48">
    <location>
        <begin position="196"/>
        <end position="198"/>
    </location>
</feature>
<feature type="strand" evidence="48">
    <location>
        <begin position="202"/>
        <end position="207"/>
    </location>
</feature>
<feature type="helix" evidence="48">
    <location>
        <begin position="215"/>
        <end position="220"/>
    </location>
</feature>
<feature type="turn" evidence="48">
    <location>
        <begin position="221"/>
        <end position="223"/>
    </location>
</feature>
<feature type="strand" evidence="48">
    <location>
        <begin position="226"/>
        <end position="232"/>
    </location>
</feature>
<feature type="helix" evidence="48">
    <location>
        <begin position="233"/>
        <end position="235"/>
    </location>
</feature>
<feature type="strand" evidence="49">
    <location>
        <begin position="236"/>
        <end position="238"/>
    </location>
</feature>
<feature type="strand" evidence="51">
    <location>
        <begin position="240"/>
        <end position="242"/>
    </location>
</feature>
<feature type="strand" evidence="49">
    <location>
        <begin position="244"/>
        <end position="246"/>
    </location>
</feature>
<feature type="helix" evidence="48">
    <location>
        <begin position="248"/>
        <end position="259"/>
    </location>
</feature>
<feature type="strand" evidence="48">
    <location>
        <begin position="263"/>
        <end position="268"/>
    </location>
</feature>
<feature type="helix" evidence="42">
    <location>
        <begin position="273"/>
        <end position="275"/>
    </location>
</feature>
<feature type="helix" evidence="48">
    <location>
        <begin position="278"/>
        <end position="289"/>
    </location>
</feature>
<feature type="strand" evidence="52">
    <location>
        <begin position="290"/>
        <end position="292"/>
    </location>
</feature>
<feature type="helix" evidence="48">
    <location>
        <begin position="296"/>
        <end position="300"/>
    </location>
</feature>
<feature type="turn" evidence="55">
    <location>
        <begin position="301"/>
        <end position="303"/>
    </location>
</feature>
<feature type="strand" evidence="42">
    <location>
        <begin position="309"/>
        <end position="311"/>
    </location>
</feature>
<feature type="turn" evidence="48">
    <location>
        <begin position="314"/>
        <end position="316"/>
    </location>
</feature>
<feature type="helix" evidence="48">
    <location>
        <begin position="321"/>
        <end position="328"/>
    </location>
</feature>
<feature type="helix" evidence="48">
    <location>
        <begin position="331"/>
        <end position="348"/>
    </location>
</feature>
<feature type="turn" evidence="48">
    <location>
        <begin position="351"/>
        <end position="356"/>
    </location>
</feature>
<feature type="strand" evidence="48">
    <location>
        <begin position="358"/>
        <end position="365"/>
    </location>
</feature>
<feature type="turn" evidence="44">
    <location>
        <begin position="367"/>
        <end position="369"/>
    </location>
</feature>
<feature type="helix" evidence="48">
    <location>
        <begin position="370"/>
        <end position="382"/>
    </location>
</feature>
<feature type="strand" evidence="48">
    <location>
        <begin position="385"/>
        <end position="392"/>
    </location>
</feature>
<feature type="helix" evidence="48">
    <location>
        <begin position="395"/>
        <end position="407"/>
    </location>
</feature>
<feature type="helix" evidence="48">
    <location>
        <begin position="410"/>
        <end position="412"/>
    </location>
</feature>
<feature type="strand" evidence="48">
    <location>
        <begin position="413"/>
        <end position="418"/>
    </location>
</feature>
<feature type="turn" evidence="48">
    <location>
        <begin position="420"/>
        <end position="422"/>
    </location>
</feature>
<feature type="strand" evidence="48">
    <location>
        <begin position="429"/>
        <end position="434"/>
    </location>
</feature>
<feature type="strand" evidence="46">
    <location>
        <begin position="436"/>
        <end position="441"/>
    </location>
</feature>
<feature type="helix" evidence="54">
    <location>
        <begin position="442"/>
        <end position="444"/>
    </location>
</feature>
<feature type="helix" evidence="48">
    <location>
        <begin position="446"/>
        <end position="452"/>
    </location>
</feature>
<feature type="helix" evidence="48">
    <location>
        <begin position="454"/>
        <end position="456"/>
    </location>
</feature>
<feature type="strand" evidence="48">
    <location>
        <begin position="457"/>
        <end position="465"/>
    </location>
</feature>
<feature type="strand" evidence="48">
    <location>
        <begin position="467"/>
        <end position="476"/>
    </location>
</feature>
<feature type="helix" evidence="48">
    <location>
        <begin position="478"/>
        <end position="485"/>
    </location>
</feature>
<feature type="strand" evidence="51">
    <location>
        <begin position="490"/>
        <end position="492"/>
    </location>
</feature>
<feature type="helix" evidence="48">
    <location>
        <begin position="496"/>
        <end position="498"/>
    </location>
</feature>
<feature type="strand" evidence="43">
    <location>
        <begin position="502"/>
        <end position="505"/>
    </location>
</feature>
<feature type="turn" evidence="47">
    <location>
        <begin position="506"/>
        <end position="508"/>
    </location>
</feature>
<feature type="strand" evidence="53">
    <location>
        <begin position="510"/>
        <end position="513"/>
    </location>
</feature>
<feature type="strand" evidence="48">
    <location>
        <begin position="516"/>
        <end position="524"/>
    </location>
</feature>
<feature type="strand" evidence="45">
    <location>
        <begin position="527"/>
        <end position="529"/>
    </location>
</feature>
<feature type="strand" evidence="48">
    <location>
        <begin position="534"/>
        <end position="541"/>
    </location>
</feature>
<feature type="strand" evidence="48">
    <location>
        <begin position="546"/>
        <end position="560"/>
    </location>
</feature>
<feature type="strand" evidence="48">
    <location>
        <begin position="563"/>
        <end position="566"/>
    </location>
</feature>
<feature type="helix" evidence="48">
    <location>
        <begin position="569"/>
        <end position="571"/>
    </location>
</feature>
<feature type="strand" evidence="48">
    <location>
        <begin position="582"/>
        <end position="592"/>
    </location>
</feature>
<feature type="strand" evidence="48">
    <location>
        <begin position="597"/>
        <end position="606"/>
    </location>
</feature>
<feature type="strand" evidence="48">
    <location>
        <begin position="608"/>
        <end position="621"/>
    </location>
</feature>
<feature type="helix" evidence="48">
    <location>
        <begin position="628"/>
        <end position="630"/>
    </location>
</feature>
<evidence type="ECO:0000250" key="1">
    <source>
        <dbReference type="UniProtKB" id="P46580"/>
    </source>
</evidence>
<evidence type="ECO:0000250" key="2">
    <source>
        <dbReference type="UniProtKB" id="Q8CIG8"/>
    </source>
</evidence>
<evidence type="ECO:0000255" key="3">
    <source>
        <dbReference type="PROSITE-ProRule" id="PRU01015"/>
    </source>
</evidence>
<evidence type="ECO:0000269" key="4">
    <source>
    </source>
</evidence>
<evidence type="ECO:0000269" key="5">
    <source>
    </source>
</evidence>
<evidence type="ECO:0000269" key="6">
    <source>
    </source>
</evidence>
<evidence type="ECO:0000269" key="7">
    <source>
    </source>
</evidence>
<evidence type="ECO:0000269" key="8">
    <source>
    </source>
</evidence>
<evidence type="ECO:0000269" key="9">
    <source>
    </source>
</evidence>
<evidence type="ECO:0000269" key="10">
    <source>
    </source>
</evidence>
<evidence type="ECO:0000269" key="11">
    <source>
    </source>
</evidence>
<evidence type="ECO:0000269" key="12">
    <source>
    </source>
</evidence>
<evidence type="ECO:0000269" key="13">
    <source>
    </source>
</evidence>
<evidence type="ECO:0000269" key="14">
    <source>
    </source>
</evidence>
<evidence type="ECO:0000269" key="15">
    <source>
    </source>
</evidence>
<evidence type="ECO:0000269" key="16">
    <source>
    </source>
</evidence>
<evidence type="ECO:0000269" key="17">
    <source>
    </source>
</evidence>
<evidence type="ECO:0000269" key="18">
    <source>
    </source>
</evidence>
<evidence type="ECO:0000269" key="19">
    <source>
    </source>
</evidence>
<evidence type="ECO:0000269" key="20">
    <source>
    </source>
</evidence>
<evidence type="ECO:0000269" key="21">
    <source>
    </source>
</evidence>
<evidence type="ECO:0000269" key="22">
    <source>
    </source>
</evidence>
<evidence type="ECO:0000269" key="23">
    <source>
    </source>
</evidence>
<evidence type="ECO:0000269" key="24">
    <source>
    </source>
</evidence>
<evidence type="ECO:0000269" key="25">
    <source>
    </source>
</evidence>
<evidence type="ECO:0000269" key="26">
    <source>
    </source>
</evidence>
<evidence type="ECO:0000269" key="27">
    <source>
    </source>
</evidence>
<evidence type="ECO:0000269" key="28">
    <source>
    </source>
</evidence>
<evidence type="ECO:0000269" key="29">
    <source>
    </source>
</evidence>
<evidence type="ECO:0000269" key="30">
    <source>
    </source>
</evidence>
<evidence type="ECO:0000269" key="31">
    <source>
    </source>
</evidence>
<evidence type="ECO:0000269" key="32">
    <source>
    </source>
</evidence>
<evidence type="ECO:0000269" key="33">
    <source ref="15"/>
</evidence>
<evidence type="ECO:0000303" key="34">
    <source>
    </source>
</evidence>
<evidence type="ECO:0000303" key="35">
    <source ref="5"/>
</evidence>
<evidence type="ECO:0000305" key="36"/>
<evidence type="ECO:0000305" key="37">
    <source>
    </source>
</evidence>
<evidence type="ECO:0007744" key="38">
    <source>
        <dbReference type="PDB" id="4GQB"/>
    </source>
</evidence>
<evidence type="ECO:0007744" key="39">
    <source>
    </source>
</evidence>
<evidence type="ECO:0007744" key="40">
    <source>
    </source>
</evidence>
<evidence type="ECO:0007744" key="41">
    <source>
    </source>
</evidence>
<evidence type="ECO:0007829" key="42">
    <source>
        <dbReference type="PDB" id="4GQB"/>
    </source>
</evidence>
<evidence type="ECO:0007829" key="43">
    <source>
        <dbReference type="PDB" id="5EMJ"/>
    </source>
</evidence>
<evidence type="ECO:0007829" key="44">
    <source>
        <dbReference type="PDB" id="5EMK"/>
    </source>
</evidence>
<evidence type="ECO:0007829" key="45">
    <source>
        <dbReference type="PDB" id="5FA5"/>
    </source>
</evidence>
<evidence type="ECO:0007829" key="46">
    <source>
        <dbReference type="PDB" id="6UXX"/>
    </source>
</evidence>
<evidence type="ECO:0007829" key="47">
    <source>
        <dbReference type="PDB" id="6UXY"/>
    </source>
</evidence>
<evidence type="ECO:0007829" key="48">
    <source>
        <dbReference type="PDB" id="6V0P"/>
    </source>
</evidence>
<evidence type="ECO:0007829" key="49">
    <source>
        <dbReference type="PDB" id="7BOC"/>
    </source>
</evidence>
<evidence type="ECO:0007829" key="50">
    <source>
        <dbReference type="PDB" id="7KIC"/>
    </source>
</evidence>
<evidence type="ECO:0007829" key="51">
    <source>
        <dbReference type="PDB" id="7M05"/>
    </source>
</evidence>
<evidence type="ECO:0007829" key="52">
    <source>
        <dbReference type="PDB" id="7UY1"/>
    </source>
</evidence>
<evidence type="ECO:0007829" key="53">
    <source>
        <dbReference type="PDB" id="7ZVL"/>
    </source>
</evidence>
<evidence type="ECO:0007829" key="54">
    <source>
        <dbReference type="PDB" id="7ZVU"/>
    </source>
</evidence>
<evidence type="ECO:0007829" key="55">
    <source>
        <dbReference type="PDB" id="8VEO"/>
    </source>
</evidence>
<protein>
    <recommendedName>
        <fullName>Protein arginine N-methyltransferase 5</fullName>
        <shortName>PRMT5</shortName>
        <ecNumber evidence="19 23 27">2.1.1.320</ecNumber>
    </recommendedName>
    <alternativeName>
        <fullName>72 kDa ICln-binding protein</fullName>
    </alternativeName>
    <alternativeName>
        <fullName>Histone-arginine N-methyltransferase PRMT5</fullName>
    </alternativeName>
    <alternativeName>
        <fullName>Jak-binding protein 1</fullName>
    </alternativeName>
    <alternativeName>
        <fullName>Shk1 kinase-binding protein 1 homolog</fullName>
        <shortName>SKB1 homolog</shortName>
        <shortName>SKB1Hs</shortName>
    </alternativeName>
    <component>
        <recommendedName>
            <fullName>Protein arginine N-methyltransferase 5, N-terminally processed</fullName>
        </recommendedName>
    </component>
</protein>
<proteinExistence type="evidence at protein level"/>
<sequence>MAAMAVGGAGGSRVSSGRDLNCVPEIADTLGAVAKQGFDFLCMPVFHPRFKREFIQEPAKNRPGPQTRSDLLLSGRDWNTLIVGKLSPWIRPDSKVEKIRRNSEAAMLQELNFGAYLGLPAFLLPLNQEDNTNLARVLTNHIHTGHHSSMFWMRVPLVAPEDLRDDIIENAPTTHTEEYSGEEKTWMWWHNFRTLCDYSKRIAVALEIGADLPSNHVIDRWLGEPIKAAILPTSIFLTNKKGFPVLSKMHQRLIFRLLKLEVQFIITGTNHHSEKEFCSYLQYLEYLSQNRPPPNAYELFAKGYEDYLQSPLQPLMDNLESQTYEVFEKDPIKYSQYQQAIYKCLLDRVPEEEKDTNVQVLMVLGAGRGPLVNASLRAAKQADRRIKLYAVEKNPNAVVTLENWQFEEWGSQVTVVSSDMREWVAPEKADIIVSELLGSFADNELSPECLDGAQHFLKDDGVSIPGEYTSFLAPISSSKLYNEVRACREKDRDPEAQFEMPYVVRLHNFHQLSAPQPCFTFSHPNRDPMIDNNRYCTLEFPVEVNTVLHGFAGYFETVLYQDITLSIRPETHSPGMFSWFPILFPIKQPITVREGQTICVRFWRCSNSKKVWYEWAVTAPVCSAIHNPTGRSYTIGL</sequence>
<dbReference type="EC" id="2.1.1.320" evidence="19 23 27"/>
<dbReference type="EMBL" id="AF015913">
    <property type="protein sequence ID" value="AAB66581.1"/>
    <property type="molecule type" value="mRNA"/>
</dbReference>
<dbReference type="EMBL" id="AF167572">
    <property type="protein sequence ID" value="AAF04502.1"/>
    <property type="molecule type" value="mRNA"/>
</dbReference>
<dbReference type="EMBL" id="AK075251">
    <property type="protein sequence ID" value="BAG52095.1"/>
    <property type="molecule type" value="mRNA"/>
</dbReference>
<dbReference type="EMBL" id="AK301812">
    <property type="protein sequence ID" value="BAG63261.1"/>
    <property type="molecule type" value="mRNA"/>
</dbReference>
<dbReference type="EMBL" id="AK302240">
    <property type="protein sequence ID" value="BAG63592.1"/>
    <property type="molecule type" value="mRNA"/>
</dbReference>
<dbReference type="EMBL" id="CR456741">
    <property type="protein sequence ID" value="CAG33022.1"/>
    <property type="molecule type" value="mRNA"/>
</dbReference>
<dbReference type="EMBL" id="AB451246">
    <property type="protein sequence ID" value="BAG70060.1"/>
    <property type="molecule type" value="mRNA"/>
</dbReference>
<dbReference type="EMBL" id="AB451370">
    <property type="protein sequence ID" value="BAG70184.1"/>
    <property type="molecule type" value="mRNA"/>
</dbReference>
<dbReference type="EMBL" id="AL132780">
    <property type="status" value="NOT_ANNOTATED_CDS"/>
    <property type="molecule type" value="Genomic_DNA"/>
</dbReference>
<dbReference type="EMBL" id="CH471078">
    <property type="protein sequence ID" value="EAW66218.1"/>
    <property type="molecule type" value="Genomic_DNA"/>
</dbReference>
<dbReference type="EMBL" id="CH471078">
    <property type="protein sequence ID" value="EAW66219.1"/>
    <property type="molecule type" value="Genomic_DNA"/>
</dbReference>
<dbReference type="EMBL" id="CH471078">
    <property type="protein sequence ID" value="EAW66220.1"/>
    <property type="molecule type" value="Genomic_DNA"/>
</dbReference>
<dbReference type="EMBL" id="CH471078">
    <property type="protein sequence ID" value="EAW66221.1"/>
    <property type="molecule type" value="Genomic_DNA"/>
</dbReference>
<dbReference type="EMBL" id="BC005820">
    <property type="status" value="NOT_ANNOTATED_CDS"/>
    <property type="molecule type" value="mRNA"/>
</dbReference>
<dbReference type="EMBL" id="BC025979">
    <property type="protein sequence ID" value="AAH25979.1"/>
    <property type="molecule type" value="mRNA"/>
</dbReference>
<dbReference type="CCDS" id="CCDS41922.1">
    <molecule id="O14744-2"/>
</dbReference>
<dbReference type="CCDS" id="CCDS61394.1">
    <molecule id="O14744-3"/>
</dbReference>
<dbReference type="CCDS" id="CCDS61395.1">
    <molecule id="O14744-4"/>
</dbReference>
<dbReference type="CCDS" id="CCDS61396.1">
    <molecule id="O14744-5"/>
</dbReference>
<dbReference type="CCDS" id="CCDS9579.1">
    <molecule id="O14744-1"/>
</dbReference>
<dbReference type="PIR" id="T03842">
    <property type="entry name" value="T03842"/>
</dbReference>
<dbReference type="RefSeq" id="NP_001034708.1">
    <molecule id="O14744-2"/>
    <property type="nucleotide sequence ID" value="NM_001039619.3"/>
</dbReference>
<dbReference type="RefSeq" id="NP_001269882.1">
    <molecule id="O14744-3"/>
    <property type="nucleotide sequence ID" value="NM_001282953.2"/>
</dbReference>
<dbReference type="RefSeq" id="NP_001269884.1">
    <molecule id="O14744-5"/>
    <property type="nucleotide sequence ID" value="NM_001282955.2"/>
</dbReference>
<dbReference type="RefSeq" id="NP_001269885.1">
    <molecule id="O14744-4"/>
    <property type="nucleotide sequence ID" value="NM_001282956.2"/>
</dbReference>
<dbReference type="RefSeq" id="NP_006100.2">
    <molecule id="O14744-1"/>
    <property type="nucleotide sequence ID" value="NM_006109.4"/>
</dbReference>
<dbReference type="PDB" id="4GQB">
    <property type="method" value="X-ray"/>
    <property type="resolution" value="2.06 A"/>
    <property type="chains" value="A=1-637"/>
</dbReference>
<dbReference type="PDB" id="4X60">
    <property type="method" value="X-ray"/>
    <property type="resolution" value="2.35 A"/>
    <property type="chains" value="A=2-637"/>
</dbReference>
<dbReference type="PDB" id="4X61">
    <property type="method" value="X-ray"/>
    <property type="resolution" value="2.85 A"/>
    <property type="chains" value="A=2-637"/>
</dbReference>
<dbReference type="PDB" id="4X63">
    <property type="method" value="X-ray"/>
    <property type="resolution" value="3.05 A"/>
    <property type="chains" value="A=2-637"/>
</dbReference>
<dbReference type="PDB" id="5C9Z">
    <property type="method" value="X-ray"/>
    <property type="resolution" value="2.36 A"/>
    <property type="chains" value="A=2-637"/>
</dbReference>
<dbReference type="PDB" id="5EMJ">
    <property type="method" value="X-ray"/>
    <property type="resolution" value="2.27 A"/>
    <property type="chains" value="A=2-637"/>
</dbReference>
<dbReference type="PDB" id="5EMK">
    <property type="method" value="X-ray"/>
    <property type="resolution" value="2.52 A"/>
    <property type="chains" value="A=2-637"/>
</dbReference>
<dbReference type="PDB" id="5EML">
    <property type="method" value="X-ray"/>
    <property type="resolution" value="2.39 A"/>
    <property type="chains" value="A=2-637"/>
</dbReference>
<dbReference type="PDB" id="5EMM">
    <property type="method" value="X-ray"/>
    <property type="resolution" value="2.37 A"/>
    <property type="chains" value="A=2-637"/>
</dbReference>
<dbReference type="PDB" id="5FA5">
    <property type="method" value="X-ray"/>
    <property type="resolution" value="2.34 A"/>
    <property type="chains" value="A=1-637"/>
</dbReference>
<dbReference type="PDB" id="6CKC">
    <property type="method" value="X-ray"/>
    <property type="resolution" value="2.80 A"/>
    <property type="chains" value="A=1-637"/>
</dbReference>
<dbReference type="PDB" id="6K1S">
    <property type="method" value="X-ray"/>
    <property type="resolution" value="2.60 A"/>
    <property type="chains" value="A=2-637"/>
</dbReference>
<dbReference type="PDB" id="6RLL">
    <property type="method" value="X-ray"/>
    <property type="resolution" value="2.22 A"/>
    <property type="chains" value="A=2-637"/>
</dbReference>
<dbReference type="PDB" id="6RLQ">
    <property type="method" value="X-ray"/>
    <property type="resolution" value="2.53 A"/>
    <property type="chains" value="A=2-637"/>
</dbReference>
<dbReference type="PDB" id="6UGH">
    <property type="method" value="EM"/>
    <property type="resolution" value="3.40 A"/>
    <property type="chains" value="A=1-637"/>
</dbReference>
<dbReference type="PDB" id="6UXX">
    <property type="method" value="X-ray"/>
    <property type="resolution" value="2.69 A"/>
    <property type="chains" value="A=2-637"/>
</dbReference>
<dbReference type="PDB" id="6UXY">
    <property type="method" value="X-ray"/>
    <property type="resolution" value="2.57 A"/>
    <property type="chains" value="A=2-637"/>
</dbReference>
<dbReference type="PDB" id="6V0N">
    <property type="method" value="X-ray"/>
    <property type="resolution" value="2.11 A"/>
    <property type="chains" value="A=1-637"/>
</dbReference>
<dbReference type="PDB" id="6V0O">
    <property type="method" value="X-ray"/>
    <property type="resolution" value="2.86 A"/>
    <property type="chains" value="A=1-637"/>
</dbReference>
<dbReference type="PDB" id="6V0P">
    <property type="method" value="X-ray"/>
    <property type="resolution" value="1.88 A"/>
    <property type="chains" value="A=1-637"/>
</dbReference>
<dbReference type="PDB" id="7BO7">
    <property type="method" value="X-ray"/>
    <property type="resolution" value="2.83 A"/>
    <property type="chains" value="AAA=2-637"/>
</dbReference>
<dbReference type="PDB" id="7BOC">
    <property type="method" value="X-ray"/>
    <property type="resolution" value="2.55 A"/>
    <property type="chains" value="A=1-292"/>
</dbReference>
<dbReference type="PDB" id="7KIB">
    <property type="method" value="X-ray"/>
    <property type="resolution" value="2.52 A"/>
    <property type="chains" value="A=2-637"/>
</dbReference>
<dbReference type="PDB" id="7KIC">
    <property type="method" value="X-ray"/>
    <property type="resolution" value="2.43 A"/>
    <property type="chains" value="A=2-637"/>
</dbReference>
<dbReference type="PDB" id="7KID">
    <property type="method" value="X-ray"/>
    <property type="resolution" value="2.50 A"/>
    <property type="chains" value="A=2-637"/>
</dbReference>
<dbReference type="PDB" id="7L1G">
    <property type="method" value="X-ray"/>
    <property type="resolution" value="2.47 A"/>
    <property type="chains" value="A=2-637"/>
</dbReference>
<dbReference type="PDB" id="7M05">
    <property type="method" value="EM"/>
    <property type="resolution" value="2.39 A"/>
    <property type="chains" value="A/C/E/G=1-637"/>
</dbReference>
<dbReference type="PDB" id="7MX7">
    <property type="method" value="X-ray"/>
    <property type="resolution" value="2.49 A"/>
    <property type="chains" value="A=1-637"/>
</dbReference>
<dbReference type="PDB" id="7MXA">
    <property type="method" value="X-ray"/>
    <property type="resolution" value="2.71 A"/>
    <property type="chains" value="A=1-637"/>
</dbReference>
<dbReference type="PDB" id="7MXC">
    <property type="method" value="X-ray"/>
    <property type="resolution" value="2.41 A"/>
    <property type="chains" value="A=1-637"/>
</dbReference>
<dbReference type="PDB" id="7MXG">
    <property type="method" value="X-ray"/>
    <property type="resolution" value="2.40 A"/>
    <property type="chains" value="A/C=1-637"/>
</dbReference>
<dbReference type="PDB" id="7MXN">
    <property type="method" value="X-ray"/>
    <property type="resolution" value="2.55 A"/>
    <property type="chains" value="A=1-637"/>
</dbReference>
<dbReference type="PDB" id="7S0U">
    <property type="method" value="X-ray"/>
    <property type="resolution" value="2.01 A"/>
    <property type="chains" value="A=2-637"/>
</dbReference>
<dbReference type="PDB" id="7S1P">
    <property type="method" value="X-ray"/>
    <property type="resolution" value="2.21 A"/>
    <property type="chains" value="A=2-637"/>
</dbReference>
<dbReference type="PDB" id="7S1Q">
    <property type="method" value="X-ray"/>
    <property type="resolution" value="2.78 A"/>
    <property type="chains" value="A=2-637"/>
</dbReference>
<dbReference type="PDB" id="7S1R">
    <property type="method" value="X-ray"/>
    <property type="resolution" value="2.10 A"/>
    <property type="chains" value="A=2-637"/>
</dbReference>
<dbReference type="PDB" id="7S1S">
    <property type="method" value="X-ray"/>
    <property type="resolution" value="2.62 A"/>
    <property type="chains" value="A=2-637"/>
</dbReference>
<dbReference type="PDB" id="7SER">
    <property type="method" value="X-ray"/>
    <property type="resolution" value="2.14 A"/>
    <property type="chains" value="A=2-637"/>
</dbReference>
<dbReference type="PDB" id="7SES">
    <property type="method" value="X-ray"/>
    <property type="resolution" value="2.50 A"/>
    <property type="chains" value="A=2-637"/>
</dbReference>
<dbReference type="PDB" id="7U30">
    <property type="method" value="X-ray"/>
    <property type="resolution" value="2.60 A"/>
    <property type="chains" value="A=2-637"/>
</dbReference>
<dbReference type="PDB" id="7UOH">
    <property type="method" value="X-ray"/>
    <property type="resolution" value="2.70 A"/>
    <property type="chains" value="A=2-637"/>
</dbReference>
<dbReference type="PDB" id="7UY1">
    <property type="method" value="X-ray"/>
    <property type="resolution" value="2.66 A"/>
    <property type="chains" value="A=2-637"/>
</dbReference>
<dbReference type="PDB" id="7UYF">
    <property type="method" value="X-ray"/>
    <property type="resolution" value="2.82 A"/>
    <property type="chains" value="A=2-637"/>
</dbReference>
<dbReference type="PDB" id="7ZUP">
    <property type="method" value="X-ray"/>
    <property type="resolution" value="2.01 A"/>
    <property type="chains" value="A=2-637"/>
</dbReference>
<dbReference type="PDB" id="7ZUQ">
    <property type="method" value="X-ray"/>
    <property type="resolution" value="2.48 A"/>
    <property type="chains" value="A=2-637"/>
</dbReference>
<dbReference type="PDB" id="7ZUU">
    <property type="method" value="X-ray"/>
    <property type="resolution" value="2.09 A"/>
    <property type="chains" value="A=2-637"/>
</dbReference>
<dbReference type="PDB" id="7ZUY">
    <property type="method" value="X-ray"/>
    <property type="resolution" value="2.00 A"/>
    <property type="chains" value="A=2-637"/>
</dbReference>
<dbReference type="PDB" id="7ZV2">
    <property type="method" value="X-ray"/>
    <property type="resolution" value="2.01 A"/>
    <property type="chains" value="A=2-637"/>
</dbReference>
<dbReference type="PDB" id="7ZVL">
    <property type="method" value="X-ray"/>
    <property type="resolution" value="2.39 A"/>
    <property type="chains" value="A=2-637"/>
</dbReference>
<dbReference type="PDB" id="7ZVU">
    <property type="method" value="X-ray"/>
    <property type="resolution" value="1.95 A"/>
    <property type="chains" value="A=2-637"/>
</dbReference>
<dbReference type="PDB" id="8CSG">
    <property type="method" value="X-ray"/>
    <property type="resolution" value="2.48 A"/>
    <property type="chains" value="A=2-637"/>
</dbReference>
<dbReference type="PDB" id="8CTB">
    <property type="method" value="X-ray"/>
    <property type="resolution" value="2.61 A"/>
    <property type="chains" value="A=2-637"/>
</dbReference>
<dbReference type="PDB" id="8CYI">
    <property type="method" value="EM"/>
    <property type="resolution" value="3.14 A"/>
    <property type="chains" value="A=1-637"/>
</dbReference>
<dbReference type="PDB" id="8G1U">
    <property type="method" value="EM"/>
    <property type="resolution" value="2.83 A"/>
    <property type="chains" value="A/E/I/M=1-637"/>
</dbReference>
<dbReference type="PDB" id="8VEO">
    <property type="method" value="X-ray"/>
    <property type="resolution" value="2.03 A"/>
    <property type="chains" value="A=2-637"/>
</dbReference>
<dbReference type="PDB" id="8VET">
    <property type="method" value="X-ray"/>
    <property type="resolution" value="2.63 A"/>
    <property type="chains" value="A=2-637"/>
</dbReference>
<dbReference type="PDB" id="8VEU">
    <property type="method" value="X-ray"/>
    <property type="resolution" value="2.46 A"/>
    <property type="chains" value="A=2-637"/>
</dbReference>
<dbReference type="PDB" id="8VEW">
    <property type="method" value="X-ray"/>
    <property type="resolution" value="2.69 A"/>
    <property type="chains" value="A=2-637"/>
</dbReference>
<dbReference type="PDB" id="8VEX">
    <property type="method" value="X-ray"/>
    <property type="resolution" value="2.79 A"/>
    <property type="chains" value="A=2-637"/>
</dbReference>
<dbReference type="PDB" id="8VEY">
    <property type="method" value="X-ray"/>
    <property type="resolution" value="2.44 A"/>
    <property type="chains" value="A=2-637"/>
</dbReference>
<dbReference type="PDB" id="8X6L">
    <property type="method" value="EM"/>
    <property type="resolution" value="3.16 A"/>
    <property type="chains" value="A/C/E/F=1-637"/>
</dbReference>
<dbReference type="PDB" id="9C10">
    <property type="method" value="X-ray"/>
    <property type="resolution" value="2.85 A"/>
    <property type="chains" value="A=1-637"/>
</dbReference>
<dbReference type="PDB" id="9DOD">
    <property type="method" value="X-ray"/>
    <property type="resolution" value="2.50 A"/>
    <property type="chains" value="A=2-637"/>
</dbReference>
<dbReference type="PDB" id="9E3A">
    <property type="method" value="EM"/>
    <property type="resolution" value="3.36 A"/>
    <property type="chains" value="J=1-637"/>
</dbReference>
<dbReference type="PDB" id="9E3B">
    <property type="method" value="EM"/>
    <property type="resolution" value="3.06 A"/>
    <property type="chains" value="A/C/G/J=1-637"/>
</dbReference>
<dbReference type="PDB" id="9E3C">
    <property type="method" value="EM"/>
    <property type="resolution" value="3.19 A"/>
    <property type="chains" value="J=1-637"/>
</dbReference>
<dbReference type="PDB" id="9EYU">
    <property type="method" value="X-ray"/>
    <property type="resolution" value="2.35 A"/>
    <property type="chains" value="A=1-637"/>
</dbReference>
<dbReference type="PDB" id="9EYV">
    <property type="method" value="X-ray"/>
    <property type="resolution" value="2.15 A"/>
    <property type="chains" value="A=1-637"/>
</dbReference>
<dbReference type="PDB" id="9EYW">
    <property type="method" value="X-ray"/>
    <property type="resolution" value="2.30 A"/>
    <property type="chains" value="A=1-637"/>
</dbReference>
<dbReference type="PDB" id="9EYX">
    <property type="method" value="X-ray"/>
    <property type="resolution" value="2.20 A"/>
    <property type="chains" value="A=1-637"/>
</dbReference>
<dbReference type="PDB" id="9MGL">
    <property type="method" value="X-ray"/>
    <property type="resolution" value="2.25 A"/>
    <property type="chains" value="A=2-637"/>
</dbReference>
<dbReference type="PDB" id="9MGM">
    <property type="method" value="X-ray"/>
    <property type="resolution" value="2.25 A"/>
    <property type="chains" value="A=2-637"/>
</dbReference>
<dbReference type="PDB" id="9MGN">
    <property type="method" value="X-ray"/>
    <property type="resolution" value="2.82 A"/>
    <property type="chains" value="A=2-637"/>
</dbReference>
<dbReference type="PDB" id="9MGP">
    <property type="method" value="X-ray"/>
    <property type="resolution" value="2.67 A"/>
    <property type="chains" value="A=2-637"/>
</dbReference>
<dbReference type="PDB" id="9MGQ">
    <property type="method" value="X-ray"/>
    <property type="resolution" value="1.85 A"/>
    <property type="chains" value="A=2-637"/>
</dbReference>
<dbReference type="PDB" id="9MGR">
    <property type="method" value="X-ray"/>
    <property type="resolution" value="2.07 A"/>
    <property type="chains" value="A=2-637"/>
</dbReference>
<dbReference type="PDB" id="9N3N">
    <property type="method" value="X-ray"/>
    <property type="resolution" value="2.75 A"/>
    <property type="chains" value="A=2-637"/>
</dbReference>
<dbReference type="PDB" id="9N3O">
    <property type="method" value="X-ray"/>
    <property type="resolution" value="2.37 A"/>
    <property type="chains" value="A=2-637"/>
</dbReference>
<dbReference type="PDB" id="9N3P">
    <property type="method" value="X-ray"/>
    <property type="resolution" value="2.51 A"/>
    <property type="chains" value="A=2-637"/>
</dbReference>
<dbReference type="PDB" id="9N3Q">
    <property type="method" value="X-ray"/>
    <property type="resolution" value="2.54 A"/>
    <property type="chains" value="A/C=2-637"/>
</dbReference>
<dbReference type="PDB" id="9N3R">
    <property type="method" value="X-ray"/>
    <property type="resolution" value="2.47 A"/>
    <property type="chains" value="A/C=2-637"/>
</dbReference>
<dbReference type="PDBsum" id="4GQB"/>
<dbReference type="PDBsum" id="4X60"/>
<dbReference type="PDBsum" id="4X61"/>
<dbReference type="PDBsum" id="4X63"/>
<dbReference type="PDBsum" id="5C9Z"/>
<dbReference type="PDBsum" id="5EMJ"/>
<dbReference type="PDBsum" id="5EMK"/>
<dbReference type="PDBsum" id="5EML"/>
<dbReference type="PDBsum" id="5EMM"/>
<dbReference type="PDBsum" id="5FA5"/>
<dbReference type="PDBsum" id="6CKC"/>
<dbReference type="PDBsum" id="6K1S"/>
<dbReference type="PDBsum" id="6RLL"/>
<dbReference type="PDBsum" id="6RLQ"/>
<dbReference type="PDBsum" id="6UGH"/>
<dbReference type="PDBsum" id="6UXX"/>
<dbReference type="PDBsum" id="6UXY"/>
<dbReference type="PDBsum" id="6V0N"/>
<dbReference type="PDBsum" id="6V0O"/>
<dbReference type="PDBsum" id="6V0P"/>
<dbReference type="PDBsum" id="7BO7"/>
<dbReference type="PDBsum" id="7BOC"/>
<dbReference type="PDBsum" id="7KIB"/>
<dbReference type="PDBsum" id="7KIC"/>
<dbReference type="PDBsum" id="7KID"/>
<dbReference type="PDBsum" id="7L1G"/>
<dbReference type="PDBsum" id="7M05"/>
<dbReference type="PDBsum" id="7MX7"/>
<dbReference type="PDBsum" id="7MXA"/>
<dbReference type="PDBsum" id="7MXC"/>
<dbReference type="PDBsum" id="7MXG"/>
<dbReference type="PDBsum" id="7MXN"/>
<dbReference type="PDBsum" id="7S0U"/>
<dbReference type="PDBsum" id="7S1P"/>
<dbReference type="PDBsum" id="7S1Q"/>
<dbReference type="PDBsum" id="7S1R"/>
<dbReference type="PDBsum" id="7S1S"/>
<dbReference type="PDBsum" id="7SER"/>
<dbReference type="PDBsum" id="7SES"/>
<dbReference type="PDBsum" id="7U30"/>
<dbReference type="PDBsum" id="7UOH"/>
<dbReference type="PDBsum" id="7UY1"/>
<dbReference type="PDBsum" id="7UYF"/>
<dbReference type="PDBsum" id="7ZUP"/>
<dbReference type="PDBsum" id="7ZUQ"/>
<dbReference type="PDBsum" id="7ZUU"/>
<dbReference type="PDBsum" id="7ZUY"/>
<dbReference type="PDBsum" id="7ZV2"/>
<dbReference type="PDBsum" id="7ZVL"/>
<dbReference type="PDBsum" id="7ZVU"/>
<dbReference type="PDBsum" id="8CSG"/>
<dbReference type="PDBsum" id="8CTB"/>
<dbReference type="PDBsum" id="8CYI"/>
<dbReference type="PDBsum" id="8G1U"/>
<dbReference type="PDBsum" id="8VEO"/>
<dbReference type="PDBsum" id="8VET"/>
<dbReference type="PDBsum" id="8VEU"/>
<dbReference type="PDBsum" id="8VEW"/>
<dbReference type="PDBsum" id="8VEX"/>
<dbReference type="PDBsum" id="8VEY"/>
<dbReference type="PDBsum" id="8X6L"/>
<dbReference type="PDBsum" id="9C10"/>
<dbReference type="PDBsum" id="9DOD"/>
<dbReference type="PDBsum" id="9E3A"/>
<dbReference type="PDBsum" id="9E3B"/>
<dbReference type="PDBsum" id="9E3C"/>
<dbReference type="PDBsum" id="9EYU"/>
<dbReference type="PDBsum" id="9EYV"/>
<dbReference type="PDBsum" id="9EYW"/>
<dbReference type="PDBsum" id="9EYX"/>
<dbReference type="PDBsum" id="9MGL"/>
<dbReference type="PDBsum" id="9MGM"/>
<dbReference type="PDBsum" id="9MGN"/>
<dbReference type="PDBsum" id="9MGP"/>
<dbReference type="PDBsum" id="9MGQ"/>
<dbReference type="PDBsum" id="9MGR"/>
<dbReference type="PDBsum" id="9N3N"/>
<dbReference type="PDBsum" id="9N3O"/>
<dbReference type="PDBsum" id="9N3P"/>
<dbReference type="PDBsum" id="9N3Q"/>
<dbReference type="PDBsum" id="9N3R"/>
<dbReference type="EMDB" id="EMD-20764"/>
<dbReference type="EMDB" id="EMD-23609"/>
<dbReference type="EMDB" id="EMD-27078"/>
<dbReference type="EMDB" id="EMD-29677"/>
<dbReference type="EMDB" id="EMD-38091"/>
<dbReference type="EMDB" id="EMD-47476"/>
<dbReference type="EMDB" id="EMD-47477"/>
<dbReference type="EMDB" id="EMD-47478"/>
<dbReference type="EMDB" id="EMD-7137"/>
<dbReference type="SMR" id="O14744"/>
<dbReference type="BioGRID" id="115688">
    <property type="interactions" value="493"/>
</dbReference>
<dbReference type="ComplexPortal" id="CPX-696">
    <property type="entry name" value="PRMT5 methylosome complex, CLNS1A variant"/>
</dbReference>
<dbReference type="ComplexPortal" id="CPX-8148">
    <property type="entry name" value="PRMT5 methylosome complex, RIOK1 variant"/>
</dbReference>
<dbReference type="ComplexPortal" id="CPX-8149">
    <property type="entry name" value="PRMT5 methylosome complex, COPR5 variant"/>
</dbReference>
<dbReference type="CORUM" id="O14744"/>
<dbReference type="DIP" id="DIP-33172N"/>
<dbReference type="FunCoup" id="O14744">
    <property type="interactions" value="3767"/>
</dbReference>
<dbReference type="IntAct" id="O14744">
    <property type="interactions" value="177"/>
</dbReference>
<dbReference type="MINT" id="O14744"/>
<dbReference type="STRING" id="9606.ENSP00000319169"/>
<dbReference type="BindingDB" id="O14744"/>
<dbReference type="ChEMBL" id="CHEMBL1795116"/>
<dbReference type="DrugBank" id="DB19170">
    <property type="generic name" value="Pemrametostat"/>
</dbReference>
<dbReference type="GuidetoPHARMACOLOGY" id="1256"/>
<dbReference type="GlyGen" id="O14744">
    <property type="glycosylation" value="3 sites, 1 O-linked glycan (3 sites)"/>
</dbReference>
<dbReference type="iPTMnet" id="O14744"/>
<dbReference type="MetOSite" id="O14744"/>
<dbReference type="PhosphoSitePlus" id="O14744"/>
<dbReference type="SwissPalm" id="O14744"/>
<dbReference type="BioMuta" id="PRMT5"/>
<dbReference type="jPOST" id="O14744"/>
<dbReference type="MassIVE" id="O14744"/>
<dbReference type="PaxDb" id="9606-ENSP00000319169"/>
<dbReference type="PeptideAtlas" id="O14744"/>
<dbReference type="ProteomicsDB" id="2039"/>
<dbReference type="ProteomicsDB" id="48200">
    <molecule id="O14744-1"/>
</dbReference>
<dbReference type="ProteomicsDB" id="48201">
    <molecule id="O14744-2"/>
</dbReference>
<dbReference type="ProteomicsDB" id="5410"/>
<dbReference type="Pumba" id="O14744"/>
<dbReference type="ABCD" id="O14744">
    <property type="antibodies" value="6 sequenced antibodies"/>
</dbReference>
<dbReference type="Antibodypedia" id="115">
    <property type="antibodies" value="665 antibodies from 44 providers"/>
</dbReference>
<dbReference type="DNASU" id="10419"/>
<dbReference type="Ensembl" id="ENST00000216350.12">
    <molecule id="O14744-3"/>
    <property type="protein sequence ID" value="ENSP00000216350.8"/>
    <property type="gene ID" value="ENSG00000100462.16"/>
</dbReference>
<dbReference type="Ensembl" id="ENST00000324366.13">
    <molecule id="O14744-1"/>
    <property type="protein sequence ID" value="ENSP00000319169.8"/>
    <property type="gene ID" value="ENSG00000100462.16"/>
</dbReference>
<dbReference type="Ensembl" id="ENST00000397440.8">
    <molecule id="O14744-4"/>
    <property type="protein sequence ID" value="ENSP00000380582.4"/>
    <property type="gene ID" value="ENSG00000100462.16"/>
</dbReference>
<dbReference type="Ensembl" id="ENST00000397441.6">
    <molecule id="O14744-2"/>
    <property type="protein sequence ID" value="ENSP00000380583.2"/>
    <property type="gene ID" value="ENSG00000100462.16"/>
</dbReference>
<dbReference type="Ensembl" id="ENST00000553897.5">
    <molecule id="O14744-5"/>
    <property type="protein sequence ID" value="ENSP00000452555.1"/>
    <property type="gene ID" value="ENSG00000100462.16"/>
</dbReference>
<dbReference type="GeneID" id="10419"/>
<dbReference type="KEGG" id="hsa:10419"/>
<dbReference type="MANE-Select" id="ENST00000324366.13">
    <property type="protein sequence ID" value="ENSP00000319169.8"/>
    <property type="RefSeq nucleotide sequence ID" value="NM_006109.5"/>
    <property type="RefSeq protein sequence ID" value="NP_006100.2"/>
</dbReference>
<dbReference type="UCSC" id="uc001whl.3">
    <molecule id="O14744-1"/>
    <property type="organism name" value="human"/>
</dbReference>
<dbReference type="AGR" id="HGNC:10894"/>
<dbReference type="CTD" id="10419"/>
<dbReference type="DisGeNET" id="10419"/>
<dbReference type="GeneCards" id="PRMT5"/>
<dbReference type="HGNC" id="HGNC:10894">
    <property type="gene designation" value="PRMT5"/>
</dbReference>
<dbReference type="HPA" id="ENSG00000100462">
    <property type="expression patterns" value="Low tissue specificity"/>
</dbReference>
<dbReference type="MIM" id="604045">
    <property type="type" value="gene"/>
</dbReference>
<dbReference type="neXtProt" id="NX_O14744"/>
<dbReference type="OpenTargets" id="ENSG00000100462"/>
<dbReference type="PharmGKB" id="PA35794"/>
<dbReference type="VEuPathDB" id="HostDB:ENSG00000100462"/>
<dbReference type="eggNOG" id="KOG0822">
    <property type="taxonomic scope" value="Eukaryota"/>
</dbReference>
<dbReference type="GeneTree" id="ENSGT00390000001141"/>
<dbReference type="HOGENOM" id="CLU_010247_3_0_1"/>
<dbReference type="InParanoid" id="O14744"/>
<dbReference type="OMA" id="IKYAWYE"/>
<dbReference type="OrthoDB" id="1368803at2759"/>
<dbReference type="PAN-GO" id="O14744">
    <property type="GO annotations" value="5 GO annotations based on evolutionary models"/>
</dbReference>
<dbReference type="PhylomeDB" id="O14744"/>
<dbReference type="TreeFam" id="TF300626"/>
<dbReference type="BioCyc" id="MetaCyc:HS02092-MONOMER"/>
<dbReference type="BRENDA" id="2.1.1.320">
    <property type="organism ID" value="2681"/>
</dbReference>
<dbReference type="PathwayCommons" id="O14744"/>
<dbReference type="Reactome" id="R-HSA-191859">
    <property type="pathway name" value="snRNP Assembly"/>
</dbReference>
<dbReference type="Reactome" id="R-HSA-3214858">
    <property type="pathway name" value="RMTs methylate histone arginines"/>
</dbReference>
<dbReference type="Reactome" id="R-HSA-6804760">
    <property type="pathway name" value="Regulation of TP53 Activity through Methylation"/>
</dbReference>
<dbReference type="SignaLink" id="O14744"/>
<dbReference type="SIGNOR" id="O14744"/>
<dbReference type="BioGRID-ORCS" id="10419">
    <property type="hits" value="746 hits in 1195 CRISPR screens"/>
</dbReference>
<dbReference type="CD-CODE" id="232F8A39">
    <property type="entry name" value="P-body"/>
</dbReference>
<dbReference type="CD-CODE" id="DEE660B4">
    <property type="entry name" value="Stress granule"/>
</dbReference>
<dbReference type="CD-CODE" id="FB4E32DD">
    <property type="entry name" value="Presynaptic clusters and postsynaptic densities"/>
</dbReference>
<dbReference type="ChiTaRS" id="PRMT5">
    <property type="organism name" value="human"/>
</dbReference>
<dbReference type="EvolutionaryTrace" id="O14744"/>
<dbReference type="GeneWiki" id="Protein_arginine_methyltransferase_5"/>
<dbReference type="GenomeRNAi" id="10419"/>
<dbReference type="Pharos" id="O14744">
    <property type="development level" value="Tchem"/>
</dbReference>
<dbReference type="PRO" id="PR:O14744"/>
<dbReference type="Proteomes" id="UP000005640">
    <property type="component" value="Chromosome 14"/>
</dbReference>
<dbReference type="RNAct" id="O14744">
    <property type="molecule type" value="protein"/>
</dbReference>
<dbReference type="Bgee" id="ENSG00000100462">
    <property type="expression patterns" value="Expressed in ventricular zone and 189 other cell types or tissues"/>
</dbReference>
<dbReference type="ExpressionAtlas" id="O14744">
    <property type="expression patterns" value="baseline and differential"/>
</dbReference>
<dbReference type="GO" id="GO:0000785">
    <property type="term" value="C:chromatin"/>
    <property type="evidence" value="ECO:0000314"/>
    <property type="project" value="UniProtKB"/>
</dbReference>
<dbReference type="GO" id="GO:0005737">
    <property type="term" value="C:cytoplasm"/>
    <property type="evidence" value="ECO:0000314"/>
    <property type="project" value="CACAO"/>
</dbReference>
<dbReference type="GO" id="GO:0005829">
    <property type="term" value="C:cytosol"/>
    <property type="evidence" value="ECO:0000314"/>
    <property type="project" value="HPA"/>
</dbReference>
<dbReference type="GO" id="GO:0005794">
    <property type="term" value="C:Golgi apparatus"/>
    <property type="evidence" value="ECO:0000314"/>
    <property type="project" value="UniProtKB"/>
</dbReference>
<dbReference type="GO" id="GO:0035097">
    <property type="term" value="C:histone methyltransferase complex"/>
    <property type="evidence" value="ECO:0000314"/>
    <property type="project" value="ParkinsonsUK-UCL"/>
</dbReference>
<dbReference type="GO" id="GO:0034709">
    <property type="term" value="C:methylosome"/>
    <property type="evidence" value="ECO:0000314"/>
    <property type="project" value="UniProtKB"/>
</dbReference>
<dbReference type="GO" id="GO:0005654">
    <property type="term" value="C:nucleoplasm"/>
    <property type="evidence" value="ECO:0000314"/>
    <property type="project" value="HPA"/>
</dbReference>
<dbReference type="GO" id="GO:0005634">
    <property type="term" value="C:nucleus"/>
    <property type="evidence" value="ECO:0000314"/>
    <property type="project" value="UniProtKB"/>
</dbReference>
<dbReference type="GO" id="GO:0070888">
    <property type="term" value="F:E-box binding"/>
    <property type="evidence" value="ECO:0000250"/>
    <property type="project" value="UniProtKB"/>
</dbReference>
<dbReference type="GO" id="GO:0008469">
    <property type="term" value="F:histone arginine N-methyltransferase activity"/>
    <property type="evidence" value="ECO:0000318"/>
    <property type="project" value="GO_Central"/>
</dbReference>
<dbReference type="GO" id="GO:0140938">
    <property type="term" value="F:histone H3 methyltransferase activity"/>
    <property type="evidence" value="ECO:0000304"/>
    <property type="project" value="Reactome"/>
</dbReference>
<dbReference type="GO" id="GO:0044020">
    <property type="term" value="F:histone H4R3 methyltransferase activity"/>
    <property type="evidence" value="ECO:0000314"/>
    <property type="project" value="UniProtKB"/>
</dbReference>
<dbReference type="GO" id="GO:0042054">
    <property type="term" value="F:histone methyltransferase activity"/>
    <property type="evidence" value="ECO:0000304"/>
    <property type="project" value="Reactome"/>
</dbReference>
<dbReference type="GO" id="GO:0042802">
    <property type="term" value="F:identical protein binding"/>
    <property type="evidence" value="ECO:0000353"/>
    <property type="project" value="IntAct"/>
</dbReference>
<dbReference type="GO" id="GO:0008327">
    <property type="term" value="F:methyl-CpG binding"/>
    <property type="evidence" value="ECO:0000314"/>
    <property type="project" value="UniProtKB"/>
</dbReference>
<dbReference type="GO" id="GO:0008168">
    <property type="term" value="F:methyltransferase activity"/>
    <property type="evidence" value="ECO:0000314"/>
    <property type="project" value="UniProtKB"/>
</dbReference>
<dbReference type="GO" id="GO:0002039">
    <property type="term" value="F:p53 binding"/>
    <property type="evidence" value="ECO:0000353"/>
    <property type="project" value="UniProtKB"/>
</dbReference>
<dbReference type="GO" id="GO:0046982">
    <property type="term" value="F:protein heterodimerization activity"/>
    <property type="evidence" value="ECO:0000314"/>
    <property type="project" value="MGI"/>
</dbReference>
<dbReference type="GO" id="GO:0016274">
    <property type="term" value="F:protein-arginine N-methyltransferase activity"/>
    <property type="evidence" value="ECO:0000314"/>
    <property type="project" value="UniProtKB"/>
</dbReference>
<dbReference type="GO" id="GO:0035243">
    <property type="term" value="F:protein-arginine omega-N symmetric methyltransferase activity"/>
    <property type="evidence" value="ECO:0000314"/>
    <property type="project" value="WormBase"/>
</dbReference>
<dbReference type="GO" id="GO:0043021">
    <property type="term" value="F:ribonucleoprotein complex binding"/>
    <property type="evidence" value="ECO:0000353"/>
    <property type="project" value="UniProtKB"/>
</dbReference>
<dbReference type="GO" id="GO:0003714">
    <property type="term" value="F:transcription corepressor activity"/>
    <property type="evidence" value="ECO:0000250"/>
    <property type="project" value="UniProtKB"/>
</dbReference>
<dbReference type="GO" id="GO:0006338">
    <property type="term" value="P:chromatin remodeling"/>
    <property type="evidence" value="ECO:0000314"/>
    <property type="project" value="UniProtKB"/>
</dbReference>
<dbReference type="GO" id="GO:0032922">
    <property type="term" value="P:circadian regulation of gene expression"/>
    <property type="evidence" value="ECO:0000250"/>
    <property type="project" value="UniProtKB"/>
</dbReference>
<dbReference type="GO" id="GO:0006353">
    <property type="term" value="P:DNA-templated transcription termination"/>
    <property type="evidence" value="ECO:0000315"/>
    <property type="project" value="UniProtKB"/>
</dbReference>
<dbReference type="GO" id="GO:0042118">
    <property type="term" value="P:endothelial cell activation"/>
    <property type="evidence" value="ECO:0000315"/>
    <property type="project" value="UniProtKB"/>
</dbReference>
<dbReference type="GO" id="GO:0090161">
    <property type="term" value="P:Golgi ribbon formation"/>
    <property type="evidence" value="ECO:0000315"/>
    <property type="project" value="UniProtKB"/>
</dbReference>
<dbReference type="GO" id="GO:0097421">
    <property type="term" value="P:liver regeneration"/>
    <property type="evidence" value="ECO:0007669"/>
    <property type="project" value="Ensembl"/>
</dbReference>
<dbReference type="GO" id="GO:0045596">
    <property type="term" value="P:negative regulation of cell differentiation"/>
    <property type="evidence" value="ECO:0007669"/>
    <property type="project" value="Ensembl"/>
</dbReference>
<dbReference type="GO" id="GO:0044027">
    <property type="term" value="P:negative regulation of gene expression via chromosomal CpG island methylation"/>
    <property type="evidence" value="ECO:0007669"/>
    <property type="project" value="Ensembl"/>
</dbReference>
<dbReference type="GO" id="GO:0018216">
    <property type="term" value="P:peptidyl-arginine methylation"/>
    <property type="evidence" value="ECO:0000315"/>
    <property type="project" value="UniProtKB"/>
</dbReference>
<dbReference type="GO" id="GO:0035246">
    <property type="term" value="P:peptidyl-arginine N-methylation"/>
    <property type="evidence" value="ECO:0000314"/>
    <property type="project" value="MGI"/>
</dbReference>
<dbReference type="GO" id="GO:1904992">
    <property type="term" value="P:positive regulation of adenylate cyclase-inhibiting dopamine receptor signaling pathway"/>
    <property type="evidence" value="ECO:0000316"/>
    <property type="project" value="WormBase"/>
</dbReference>
<dbReference type="GO" id="GO:0048026">
    <property type="term" value="P:positive regulation of mRNA splicing, via spliceosome"/>
    <property type="evidence" value="ECO:0000303"/>
    <property type="project" value="ComplexPortal"/>
</dbReference>
<dbReference type="GO" id="GO:0048714">
    <property type="term" value="P:positive regulation of oligodendrocyte differentiation"/>
    <property type="evidence" value="ECO:0007669"/>
    <property type="project" value="Ensembl"/>
</dbReference>
<dbReference type="GO" id="GO:0006355">
    <property type="term" value="P:regulation of DNA-templated transcription"/>
    <property type="evidence" value="ECO:0000318"/>
    <property type="project" value="GO_Central"/>
</dbReference>
<dbReference type="GO" id="GO:0070372">
    <property type="term" value="P:regulation of ERK1 and ERK2 cascade"/>
    <property type="evidence" value="ECO:0007669"/>
    <property type="project" value="Ensembl"/>
</dbReference>
<dbReference type="GO" id="GO:0007088">
    <property type="term" value="P:regulation of mitotic nuclear division"/>
    <property type="evidence" value="ECO:0000304"/>
    <property type="project" value="ProtInc"/>
</dbReference>
<dbReference type="GO" id="GO:1901796">
    <property type="term" value="P:regulation of signal transduction by p53 class mediator"/>
    <property type="evidence" value="ECO:0000304"/>
    <property type="project" value="Reactome"/>
</dbReference>
<dbReference type="GO" id="GO:0000387">
    <property type="term" value="P:spliceosomal snRNP assembly"/>
    <property type="evidence" value="ECO:0000315"/>
    <property type="project" value="UniProtKB"/>
</dbReference>
<dbReference type="CDD" id="cd02440">
    <property type="entry name" value="AdoMet_MTases"/>
    <property type="match status" value="1"/>
</dbReference>
<dbReference type="FunFam" id="2.70.160.11:FF:000003">
    <property type="entry name" value="Protein arginine N-methyltransferase 5"/>
    <property type="match status" value="1"/>
</dbReference>
<dbReference type="FunFam" id="3.20.20.150:FF:000008">
    <property type="entry name" value="Protein arginine N-methyltransferase 5"/>
    <property type="match status" value="1"/>
</dbReference>
<dbReference type="FunFam" id="3.40.50.150:FF:000029">
    <property type="entry name" value="Protein arginine N-methyltransferase 5"/>
    <property type="match status" value="1"/>
</dbReference>
<dbReference type="Gene3D" id="3.20.20.150">
    <property type="entry name" value="Divalent-metal-dependent TIM barrel enzymes"/>
    <property type="match status" value="1"/>
</dbReference>
<dbReference type="Gene3D" id="2.70.160.11">
    <property type="entry name" value="Hnrnp arginine n-methyltransferase1"/>
    <property type="match status" value="1"/>
</dbReference>
<dbReference type="Gene3D" id="3.40.50.150">
    <property type="entry name" value="Vaccinia Virus protein VP39"/>
    <property type="match status" value="1"/>
</dbReference>
<dbReference type="IDEAL" id="IID00405"/>
<dbReference type="InterPro" id="IPR025799">
    <property type="entry name" value="Arg_MeTrfase"/>
</dbReference>
<dbReference type="InterPro" id="IPR007857">
    <property type="entry name" value="Arg_MeTrfase_PRMT5"/>
</dbReference>
<dbReference type="InterPro" id="IPR035075">
    <property type="entry name" value="PRMT5"/>
</dbReference>
<dbReference type="InterPro" id="IPR035248">
    <property type="entry name" value="PRMT5_C"/>
</dbReference>
<dbReference type="InterPro" id="IPR035247">
    <property type="entry name" value="PRMT5_TIM"/>
</dbReference>
<dbReference type="InterPro" id="IPR029063">
    <property type="entry name" value="SAM-dependent_MTases_sf"/>
</dbReference>
<dbReference type="PANTHER" id="PTHR10738">
    <property type="entry name" value="PROTEIN ARGININE N-METHYLTRANSFERASE 5"/>
    <property type="match status" value="1"/>
</dbReference>
<dbReference type="PANTHER" id="PTHR10738:SF0">
    <property type="entry name" value="PROTEIN ARGININE N-METHYLTRANSFERASE 5"/>
    <property type="match status" value="1"/>
</dbReference>
<dbReference type="Pfam" id="PF05185">
    <property type="entry name" value="PRMT5"/>
    <property type="match status" value="1"/>
</dbReference>
<dbReference type="Pfam" id="PF17286">
    <property type="entry name" value="PRMT5_C"/>
    <property type="match status" value="1"/>
</dbReference>
<dbReference type="Pfam" id="PF17285">
    <property type="entry name" value="PRMT5_TIM"/>
    <property type="match status" value="1"/>
</dbReference>
<dbReference type="PIRSF" id="PIRSF015894">
    <property type="entry name" value="Skb1_MeTrfase"/>
    <property type="match status" value="1"/>
</dbReference>
<dbReference type="SUPFAM" id="SSF53335">
    <property type="entry name" value="S-adenosyl-L-methionine-dependent methyltransferases"/>
    <property type="match status" value="1"/>
</dbReference>
<dbReference type="PROSITE" id="PS51678">
    <property type="entry name" value="SAM_MT_PRMT"/>
    <property type="match status" value="1"/>
</dbReference>
<comment type="function">
    <text evidence="2 4 6 7 8 10 12 14 16 19 20 21 22 23 24 25 26 28 29 30">Arginine methyltransferase that can both catalyze the formation of omega-N monomethylarginine (MMA) and symmetrical dimethylarginine (sDMA), with a preference for the formation of MMA (PubMed:10531356, PubMed:11152681, PubMed:11747828, PubMed:12411503, PubMed:15737618, PubMed:17709427, PubMed:20159986, PubMed:20810653, PubMed:21081503, PubMed:21258366, PubMed:21917714, PubMed:22269951). Specifically mediates the symmetrical dimethylation of arginine residues in the small nuclear ribonucleoproteins Sm D1 (SNRPD1) and Sm D3 (SNRPD3); such methylation being required for the assembly and biogenesis of snRNP core particles (PubMed:11747828, PubMed:12411503, PubMed:17709427). Methylates SUPT5H and may regulate its transcriptional elongation properties (PubMed:12718890). May methylate the N-terminal region of MBD2 (PubMed:16428440). Mono- and dimethylates arginine residues of myelin basic protein (MBP) in vitro. May play a role in cytokine-activated transduction pathways. Negatively regulates cyclin E1 promoter activity and cellular proliferation. Methylates histone H2A and H4 'Arg-3' during germ cell development (By similarity). Methylates histone H3 'Arg-8', which may repress transcription (By similarity). Methylates the Piwi proteins (PIWIL1, PIWIL2 and PIWIL4), methylation of Piwi proteins being required for the interaction with Tudor domain-containing proteins and subsequent localization to the meiotic nuage (By similarity). Methylates RPS10. Attenuates EGF signaling through the MAPK1/MAPK3 pathway acting at 2 levels. First, monomethylates EGFR; this enhances EGFR 'Tyr-1197' phosphorylation and PTPN6 recruitment, eventually leading to reduced SOS1 phosphorylation (PubMed:21258366, PubMed:21917714). Second, methylates RAF1 and probably BRAF, hence destabilizing these 2 signaling proteins and reducing their catalytic activity (PubMed:21917714). Required for induction of E-selectin and VCAM-1, on the endothelial cells surface at sites of inflammation. Methylates HOXA9 (PubMed:22269951). Methylates and regulates SRGAP2 which is involved in cell migration and differentiation (PubMed:20810653). Acts as a transcriptional corepressor in CRY1-mediated repression of the core circadian component PER1 by regulating the H4R3 dimethylation at the PER1 promoter (By similarity). Methylates GM130/GOLGA2, regulating Golgi ribbon formation (PubMed:20421892). Methylates H4R3 in genes involved in glioblastomagenesis in a CHTOP- and/or TET1-dependent manner (PubMed:25284789). Symmetrically methylates POLR2A, a modification that allows the recruitment to POLR2A of proteins including SMN1/SMN2 and SETX. This is required for resolving RNA-DNA hybrids created by RNA polymerase II, that form R-loop in transcription terminal regions, an important step in proper transcription termination (PubMed:26700805). Along with LYAR, binds the promoter of gamma-globin HBG1/HBG2 and represses its expression (PubMed:25092918). Symmetrically methylates NCL (PubMed:21081503). Methylates p53/TP53; methylation might possibly affect p53/TP53 target gene specificity (PubMed:19011621). Involved in spliceosome maturation and mRNA splicing in prophase I spermatocytes through the catalysis of the symmetrical arginine dimethylation of SNRPB (small nuclear ribonucleoprotein-associated protein) and the interaction with tudor domain-containing protein TDRD6 (By similarity).</text>
</comment>
<comment type="catalytic activity">
    <reaction evidence="19 23 27">
        <text>L-arginyl-[protein] + 2 S-adenosyl-L-methionine = N(omega),N(omega)'-dimethyl-L-arginyl-[protein] + 2 S-adenosyl-L-homocysteine + 2 H(+)</text>
        <dbReference type="Rhea" id="RHEA:48108"/>
        <dbReference type="Rhea" id="RHEA-COMP:10532"/>
        <dbReference type="Rhea" id="RHEA-COMP:11992"/>
        <dbReference type="ChEBI" id="CHEBI:15378"/>
        <dbReference type="ChEBI" id="CHEBI:29965"/>
        <dbReference type="ChEBI" id="CHEBI:57856"/>
        <dbReference type="ChEBI" id="CHEBI:59789"/>
        <dbReference type="ChEBI" id="CHEBI:88221"/>
        <dbReference type="EC" id="2.1.1.320"/>
    </reaction>
</comment>
<comment type="activity regulation">
    <text evidence="25">Activity is increased by EGF, HGF, FGF1 or FGF2 treatments, and slightly decreased by NGF treatment.</text>
</comment>
<comment type="subunit">
    <text evidence="2 4 5 6 8 10 11 12 13 14 15 16 17 18 19 20 22 23 24 25 26 27 28 29 30 31 32">Forms, at least, homodimers and homotetramers (PubMed:11152681). Component of the methylosome complex, composed of PRMT5, WDR77 and CLNS1A (PubMed:21081503, PubMed:23071334, PubMed:33376131). Found in a complex composed of PRMT5, WDR77 and RIOK1 (PubMed:21081503). RIOK1 and CLNS1A associate with PRMT5 in a mutually exclusive fashion, which allows the recruitment of distinct methylation substrates, such as nucleolin/NCL and Sm proteins, respectively (PubMed:21081503). Interacts with PRDM1 (By similarity). Identified in a complex composed of methylosome and PRMT1 and ERH (PubMed:25284789). Interacts with EGFR; methylates EGFR and stimulates EGFR-mediated ERK activation. Interacts with HOXA9. Interacts with SRGAP2. Found in a complex with COPRS, RUNX1 and CBFB. Interacts with CHTOP; the interaction symmetrically methylates CHTOP, but seems to require the presence of PRMT1 (PubMed:25284789). Interacts with EPB41L3; this modulates methylation of target proteins. Component of a high molecular weight E2F-pocket protein complex, CERC (cyclin E1 repressor complex). Associates with SWI/SNF remodeling complexes containing SMARCA2 and SMARCA4. Interacts with JAK2, SSTR1, SUPT5H, BRAF and with active RAF1. Interacts with LSM11, PRMT7 and SNRPD3 (PubMed:16087681, PubMed:17709427). Interacts with COPRS; promoting its recruitment on histone H4. Interacts with CLNS1A/pICln (PubMed:21081503, PubMed:9556550). Identified in a complex with CLNS1A/pICln and Sm proteins. Interacts with RPS10 (PubMed:20159986). Interacts with WDR77. Interacts with IWS1. Interacts with CRY1. Interacts with POLR2A (PubMed:26700805). Interacts with SMN1/SMN2 (PubMed:26700805). Interacts with LYAR; this interaction is direct (PubMed:25092918). Interacts with TTC5/STRAP; this interaction is DNA damage-dependent and promotes PRMT5 interaction with p53/TP53 (PubMed:19011621). Interacts with p53/TP53 in response to DNA damage; the interaction is TTC5/STRAP dependent (PubMed:19011621). Interacts with FAM47E; the interaction is direct, promotes PRMT5 localization to chromatin, and does not disrupt its association with WDR77 or STUB1 (PubMed:33376131). Interacts with TDRD6 (By similarity). Interacts with STUB1 (PubMed:33376131). Interacts with MBD2 (PubMed:16428440). Does not interact with MBD3 (PubMed:16428440).</text>
</comment>
<comment type="interaction">
    <interactant intactId="EBI-351098">
        <id>O14744</id>
    </interactant>
    <interactant intactId="EBI-751728">
        <id>P01019</id>
        <label>AGT</label>
    </interactant>
    <organismsDiffer>false</organismsDiffer>
    <experiments>3</experiments>
</comment>
<comment type="interaction">
    <interactant intactId="EBI-351098">
        <id>O14744</id>
    </interactant>
    <interactant intactId="EBI-8643161">
        <id>Q9NX04</id>
        <label>AIRIM</label>
    </interactant>
    <organismsDiffer>false</organismsDiffer>
    <experiments>3</experiments>
</comment>
<comment type="interaction">
    <interactant intactId="EBI-351098">
        <id>O14744</id>
    </interactant>
    <interactant intactId="EBI-2837444">
        <id>Q8WUW1</id>
        <label>BRK1</label>
    </interactant>
    <organismsDiffer>false</organismsDiffer>
    <experiments>3</experiments>
</comment>
<comment type="interaction">
    <interactant intactId="EBI-351098">
        <id>O14744</id>
    </interactant>
    <interactant intactId="EBI-2874501">
        <id>Q08289</id>
        <label>CACNB2</label>
    </interactant>
    <organismsDiffer>false</organismsDiffer>
    <experiments>3</experiments>
</comment>
<comment type="interaction">
    <interactant intactId="EBI-351098">
        <id>O14744</id>
    </interactant>
    <interactant intactId="EBI-357407">
        <id>P78371</id>
        <label>CCT2</label>
    </interactant>
    <organismsDiffer>false</organismsDiffer>
    <experiments>3</experiments>
</comment>
<comment type="interaction">
    <interactant intactId="EBI-351098">
        <id>O14744</id>
    </interactant>
    <interactant intactId="EBI-295634">
        <id>Q16543</id>
        <label>CDC37</label>
    </interactant>
    <organismsDiffer>false</organismsDiffer>
    <experiments>3</experiments>
</comment>
<comment type="interaction">
    <interactant intactId="EBI-351098">
        <id>O14744</id>
    </interactant>
    <interactant intactId="EBI-8467076">
        <id>Q8N8U2</id>
        <label>CDYL2</label>
    </interactant>
    <organismsDiffer>false</organismsDiffer>
    <experiments>2</experiments>
</comment>
<comment type="interaction">
    <interactant intactId="EBI-351098">
        <id>O14744</id>
    </interactant>
    <interactant intactId="EBI-724693">
        <id>P54105</id>
        <label>CLNS1A</label>
    </interactant>
    <organismsDiffer>false</organismsDiffer>
    <experiments>9</experiments>
</comment>
<comment type="interaction">
    <interactant intactId="EBI-351098">
        <id>O14744</id>
    </interactant>
    <interactant intactId="EBI-10200977">
        <id>P21964-2</id>
        <label>COMT</label>
    </interactant>
    <organismsDiffer>false</organismsDiffer>
    <experiments>3</experiments>
</comment>
<comment type="interaction">
    <interactant intactId="EBI-351098">
        <id>O14744</id>
    </interactant>
    <interactant intactId="EBI-1642558">
        <id>Q9NQ92</id>
        <label>COPRS</label>
    </interactant>
    <organismsDiffer>false</organismsDiffer>
    <experiments>7</experiments>
</comment>
<comment type="interaction">
    <interactant intactId="EBI-351098">
        <id>O14744</id>
    </interactant>
    <interactant intactId="EBI-741297">
        <id>Q16526</id>
        <label>CRY1</label>
    </interactant>
    <organismsDiffer>false</organismsDiffer>
    <experiments>3</experiments>
</comment>
<comment type="interaction">
    <interactant intactId="EBI-351098">
        <id>O14744</id>
    </interactant>
    <interactant intactId="EBI-923653">
        <id>Q9Y6K1</id>
        <label>DNMT3A</label>
    </interactant>
    <organismsDiffer>false</organismsDiffer>
    <experiments>4</experiments>
</comment>
<comment type="interaction">
    <interactant intactId="EBI-351098">
        <id>O14744</id>
    </interactant>
    <interactant intactId="EBI-448924">
        <id>Q01094</id>
        <label>E2F1</label>
    </interactant>
    <organismsDiffer>false</organismsDiffer>
    <experiments>8</experiments>
</comment>
<comment type="interaction">
    <interactant intactId="EBI-351098">
        <id>O14744</id>
    </interactant>
    <interactant intactId="EBI-2339219">
        <id>Q08426</id>
        <label>EHHADH</label>
    </interactant>
    <organismsDiffer>false</organismsDiffer>
    <experiments>3</experiments>
</comment>
<comment type="interaction">
    <interactant intactId="EBI-351098">
        <id>O14744</id>
    </interactant>
    <interactant intactId="EBI-299104">
        <id>P38919</id>
        <label>EIF4A3</label>
    </interactant>
    <organismsDiffer>false</organismsDiffer>
    <experiments>3</experiments>
</comment>
<comment type="interaction">
    <interactant intactId="EBI-351098">
        <id>O14744</id>
    </interactant>
    <interactant intactId="EBI-742350">
        <id>Q14241</id>
        <label>ELOA</label>
    </interactant>
    <organismsDiffer>false</organismsDiffer>
    <experiments>3</experiments>
</comment>
<comment type="interaction">
    <interactant intactId="EBI-351098">
        <id>O14744</id>
    </interactant>
    <interactant intactId="EBI-10182490">
        <id>O15197-2</id>
        <label>EPHB6</label>
    </interactant>
    <organismsDiffer>false</organismsDiffer>
    <experiments>3</experiments>
</comment>
<comment type="interaction">
    <interactant intactId="EBI-351098">
        <id>O14744</id>
    </interactant>
    <interactant intactId="EBI-26583822">
        <id>Q6ZV65</id>
        <label>FAM47E</label>
    </interactant>
    <organismsDiffer>false</organismsDiffer>
    <experiments>2</experiments>
</comment>
<comment type="interaction">
    <interactant intactId="EBI-351098">
        <id>O14744</id>
    </interactant>
    <interactant intactId="EBI-852851">
        <id>P01100</id>
        <label>FOS</label>
    </interactant>
    <organismsDiffer>false</organismsDiffer>
    <experiments>3</experiments>
</comment>
<comment type="interaction">
    <interactant intactId="EBI-351098">
        <id>O14744</id>
    </interactant>
    <interactant intactId="EBI-1052570">
        <id>O95995</id>
        <label>GAS8</label>
    </interactant>
    <organismsDiffer>false</organismsDiffer>
    <experiments>3</experiments>
</comment>
<comment type="interaction">
    <interactant intactId="EBI-351098">
        <id>O14744</id>
    </interactant>
    <interactant intactId="EBI-401755">
        <id>P62993</id>
        <label>GRB2</label>
    </interactant>
    <organismsDiffer>false</organismsDiffer>
    <experiments>4</experiments>
</comment>
<comment type="interaction">
    <interactant intactId="EBI-351098">
        <id>O14744</id>
    </interactant>
    <interactant intactId="EBI-8469396">
        <id>Q8TE85</id>
        <label>GRHL3</label>
    </interactant>
    <organismsDiffer>false</organismsDiffer>
    <experiments>2</experiments>
</comment>
<comment type="interaction">
    <interactant intactId="EBI-351098">
        <id>O14744</id>
    </interactant>
    <interactant intactId="EBI-6115579">
        <id>Q9BX10</id>
        <label>GTPBP2</label>
    </interactant>
    <organismsDiffer>false</organismsDiffer>
    <experiments>2</experiments>
</comment>
<comment type="interaction">
    <interactant intactId="EBI-351098">
        <id>O14744</id>
    </interactant>
    <interactant intactId="EBI-302023">
        <id>P62805</id>
        <label>H4C9</label>
    </interactant>
    <organismsDiffer>false</organismsDiffer>
    <experiments>6</experiments>
</comment>
<comment type="interaction">
    <interactant intactId="EBI-351098">
        <id>O14744</id>
    </interactant>
    <interactant intactId="EBI-742314">
        <id>P31269</id>
        <label>HOXA9</label>
    </interactant>
    <organismsDiffer>false</organismsDiffer>
    <experiments>4</experiments>
</comment>
<comment type="interaction">
    <interactant intactId="EBI-351098">
        <id>O14744</id>
    </interactant>
    <interactant intactId="EBI-719620">
        <id>Q00613</id>
        <label>HSF1</label>
    </interactant>
    <organismsDiffer>false</organismsDiffer>
    <experiments>3</experiments>
</comment>
<comment type="interaction">
    <interactant intactId="EBI-351098">
        <id>O14744</id>
    </interactant>
    <interactant intactId="EBI-2556193">
        <id>Q63ZY3</id>
        <label>KANK2</label>
    </interactant>
    <organismsDiffer>false</organismsDiffer>
    <experiments>3</experiments>
</comment>
<comment type="interaction">
    <interactant intactId="EBI-351098">
        <id>O14744</id>
    </interactant>
    <interactant intactId="EBI-10087153">
        <id>P03952</id>
        <label>KLKB1</label>
    </interactant>
    <organismsDiffer>false</organismsDiffer>
    <experiments>3</experiments>
</comment>
<comment type="interaction">
    <interactant intactId="EBI-351098">
        <id>O14744</id>
    </interactant>
    <interactant intactId="EBI-739832">
        <id>Q8TBB1</id>
        <label>LNX1</label>
    </interactant>
    <organismsDiffer>false</organismsDiffer>
    <experiments>3</experiments>
</comment>
<comment type="interaction">
    <interactant intactId="EBI-351098">
        <id>O14744</id>
    </interactant>
    <interactant intactId="EBI-715909">
        <id>P06858</id>
        <label>LPL</label>
    </interactant>
    <organismsDiffer>false</organismsDiffer>
    <experiments>3</experiments>
</comment>
<comment type="interaction">
    <interactant intactId="EBI-351098">
        <id>O14744</id>
    </interactant>
    <interactant intactId="EBI-15759783">
        <id>Q86UQ8-1</id>
        <label>NFE4</label>
    </interactant>
    <organismsDiffer>false</organismsDiffer>
    <experiments>2</experiments>
</comment>
<comment type="interaction">
    <interactant intactId="EBI-351098">
        <id>O14744</id>
    </interactant>
    <interactant intactId="EBI-741158">
        <id>Q96HA8</id>
        <label>NTAQ1</label>
    </interactant>
    <organismsDiffer>false</organismsDiffer>
    <experiments>3</experiments>
</comment>
<comment type="interaction">
    <interactant intactId="EBI-351098">
        <id>O14744</id>
    </interactant>
    <interactant intactId="EBI-1052153">
        <id>Q8WVJ2</id>
        <label>NUDCD2</label>
    </interactant>
    <organismsDiffer>false</organismsDiffer>
    <experiments>2</experiments>
</comment>
<comment type="interaction">
    <interactant intactId="EBI-351098">
        <id>O14744</id>
    </interactant>
    <interactant intactId="EBI-295301">
        <id>P24928</id>
        <label>POLR2A</label>
    </interactant>
    <organismsDiffer>false</organismsDiffer>
    <experiments>6</experiments>
</comment>
<comment type="interaction">
    <interactant intactId="EBI-351098">
        <id>O14744</id>
    </interactant>
    <interactant intactId="EBI-351098">
        <id>O14744</id>
        <label>PRMT5</label>
    </interactant>
    <organismsDiffer>false</organismsDiffer>
    <experiments>3</experiments>
</comment>
<comment type="interaction">
    <interactant intactId="EBI-351098">
        <id>O14744</id>
    </interactant>
    <interactant intactId="EBI-780319">
        <id>Q86U06</id>
        <label>RBM23</label>
    </interactant>
    <organismsDiffer>false</organismsDiffer>
    <experiments>3</experiments>
</comment>
<comment type="interaction">
    <interactant intactId="EBI-351098">
        <id>O14744</id>
    </interactant>
    <interactant intactId="EBI-7307838">
        <id>Q9BRS2</id>
        <label>RIOK1</label>
    </interactant>
    <organismsDiffer>false</organismsDiffer>
    <experiments>6</experiments>
</comment>
<comment type="interaction">
    <interactant intactId="EBI-351098">
        <id>O14744</id>
    </interactant>
    <interactant intactId="EBI-1051034">
        <id>O75044</id>
        <label>SRGAP2</label>
    </interactant>
    <organismsDiffer>false</organismsDiffer>
    <experiments>4</experiments>
</comment>
<comment type="interaction">
    <interactant intactId="EBI-351098">
        <id>O14744</id>
    </interactant>
    <interactant intactId="EBI-492476">
        <id>Q96RU7</id>
        <label>TRIB3</label>
    </interactant>
    <organismsDiffer>false</organismsDiffer>
    <experiments>2</experiments>
</comment>
<comment type="interaction">
    <interactant intactId="EBI-351098">
        <id>O14744</id>
    </interactant>
    <interactant intactId="EBI-1052596">
        <id>P31930</id>
        <label>UQCRC1</label>
    </interactant>
    <organismsDiffer>false</organismsDiffer>
    <experiments>3</experiments>
</comment>
<comment type="interaction">
    <interactant intactId="EBI-351098">
        <id>O14744</id>
    </interactant>
    <interactant intactId="EBI-12157263">
        <id>P40337-2</id>
        <label>VHL</label>
    </interactant>
    <organismsDiffer>false</organismsDiffer>
    <experiments>3</experiments>
</comment>
<comment type="interaction">
    <interactant intactId="EBI-351098">
        <id>O14744</id>
    </interactant>
    <interactant intactId="EBI-1237307">
        <id>Q9BQA1</id>
        <label>WDR77</label>
    </interactant>
    <organismsDiffer>false</organismsDiffer>
    <experiments>17</experiments>
</comment>
<comment type="interaction">
    <interactant intactId="EBI-351098">
        <id>O14744</id>
    </interactant>
    <interactant intactId="EBI-347088">
        <id>P63104</id>
        <label>YWHAZ</label>
    </interactant>
    <organismsDiffer>false</organismsDiffer>
    <experiments>2</experiments>
</comment>
<comment type="interaction">
    <interactant intactId="EBI-351098">
        <id>O14744</id>
    </interactant>
    <interactant intactId="EBI-746595">
        <id>Q96E35</id>
        <label>ZMYND19</label>
    </interactant>
    <organismsDiffer>false</organismsDiffer>
    <experiments>3</experiments>
</comment>
<comment type="interaction">
    <interactant intactId="EBI-351098">
        <id>O14744</id>
    </interactant>
    <interactant intactId="EBI-1565930">
        <id>Q91XC0</id>
        <label>Ajuba</label>
    </interactant>
    <organismsDiffer>true</organismsDiffer>
    <experiments>4</experiments>
</comment>
<comment type="interaction">
    <interactant intactId="EBI-351098">
        <id>O14744</id>
    </interactant>
    <interactant intactId="EBI-6930799">
        <id>P03418</id>
        <label>N</label>
    </interactant>
    <organismsDiffer>true</organismsDiffer>
    <experiments>2</experiments>
</comment>
<comment type="interaction">
    <interactant intactId="EBI-26583938">
        <id>O14744-1</id>
    </interactant>
    <interactant intactId="EBI-26583549">
        <id>Q6ZV65-2</id>
        <label>FAM47E</label>
    </interactant>
    <organismsDiffer>false</organismsDiffer>
    <experiments>5</experiments>
</comment>
<comment type="subcellular location">
    <subcellularLocation>
        <location evidence="23 25 26">Cytoplasm</location>
    </subcellularLocation>
    <subcellularLocation>
        <location evidence="17 23 25 26">Nucleus</location>
    </subcellularLocation>
    <subcellularLocation>
        <location evidence="14 31">Chromosome</location>
    </subcellularLocation>
    <subcellularLocation>
        <location evidence="21">Golgi apparatus</location>
    </subcellularLocation>
    <text evidence="14 31">Localizes to promoter regions of target genes on chromosomes (PubMed:33376131). Localizes to methylated chromatin (PubMed:16428440).</text>
</comment>
<comment type="alternative products">
    <event type="alternative splicing"/>
    <isoform>
        <id>O14744-1</id>
        <name>1</name>
        <sequence type="displayed"/>
    </isoform>
    <isoform>
        <id>O14744-2</id>
        <name>2</name>
        <sequence type="described" ref="VSP_043382"/>
    </isoform>
    <isoform>
        <id>O14744-4</id>
        <name>4</name>
        <sequence type="described" ref="VSP_043382 VSP_054768"/>
    </isoform>
    <isoform>
        <id>O14744-5</id>
        <name>5</name>
        <sequence type="described" ref="VSP_054685"/>
    </isoform>
    <isoform>
        <id>O14744-3</id>
        <name>3</name>
        <sequence type="described" ref="VSP_043382 VSP_054685"/>
    </isoform>
    <text>Additional isoforms seems to exist. According to EST sequences.</text>
</comment>
<comment type="tissue specificity">
    <text evidence="32">Ubiquitous.</text>
</comment>
<comment type="similarity">
    <text evidence="3">Belongs to the class I-like SAM-binding methyltransferase superfamily. Protein arginine N-methyltransferase family.</text>
</comment>
<comment type="sequence caution" evidence="36">
    <conflict type="frameshift">
        <sequence resource="EMBL" id="BC005820"/>
    </conflict>
</comment>
<name>ANM5_HUMAN</name>
<reference key="1">
    <citation type="journal article" date="1998" name="J. Biol. Chem.">
        <title>pICln binds to a mammalian homolog of a yeast protein involved in regulation of cell morphology.</title>
        <authorList>
            <person name="Krapivinsky G."/>
            <person name="Pu W."/>
            <person name="Wickman K."/>
            <person name="Krapivinsky L."/>
            <person name="Clapham D.E."/>
        </authorList>
    </citation>
    <scope>NUCLEOTIDE SEQUENCE [MRNA] (ISOFORM 1)</scope>
    <scope>TISSUE SPECIFICITY</scope>
    <scope>INTERACTION WITH CLNS1A</scope>
</reference>
<reference key="2">
    <citation type="journal article" date="1998" name="Proc. Natl. Acad. Sci. U.S.A.">
        <title>Negative regulation of mitosis in fission yeast by the shk1 interacting protein skb1 and its human homolog, Skb1Hs.</title>
        <authorList>
            <person name="Gilbreth M."/>
            <person name="Yang P."/>
            <person name="Bartholomeusz G."/>
            <person name="Pimental R.A."/>
            <person name="Kansra S."/>
            <person name="Gadiraju R."/>
            <person name="Marcus S."/>
        </authorList>
    </citation>
    <scope>NUCLEOTIDE SEQUENCE [MRNA] (ISOFORM 1)</scope>
</reference>
<reference key="3">
    <citation type="journal article" date="1999" name="J. Biol. Chem.">
        <title>The human homologue of the yeast proteins Skb1 and Hsl7p interacts with Jak kinases and contains protein methyltransferase activity.</title>
        <authorList>
            <person name="Pollack B.P."/>
            <person name="Kotenko S.V."/>
            <person name="He W."/>
            <person name="Izotova L.S."/>
            <person name="Barnoski B.L."/>
            <person name="Pestka S."/>
        </authorList>
    </citation>
    <scope>NUCLEOTIDE SEQUENCE [MRNA] (ISOFORM 1)</scope>
    <scope>FUNCTION</scope>
    <scope>INTERACTION WITH JAK2</scope>
</reference>
<reference key="4">
    <citation type="journal article" date="2004" name="Nat. Genet.">
        <title>Complete sequencing and characterization of 21,243 full-length human cDNAs.</title>
        <authorList>
            <person name="Ota T."/>
            <person name="Suzuki Y."/>
            <person name="Nishikawa T."/>
            <person name="Otsuki T."/>
            <person name="Sugiyama T."/>
            <person name="Irie R."/>
            <person name="Wakamatsu A."/>
            <person name="Hayashi K."/>
            <person name="Sato H."/>
            <person name="Nagai K."/>
            <person name="Kimura K."/>
            <person name="Makita H."/>
            <person name="Sekine M."/>
            <person name="Obayashi M."/>
            <person name="Nishi T."/>
            <person name="Shibahara T."/>
            <person name="Tanaka T."/>
            <person name="Ishii S."/>
            <person name="Yamamoto J."/>
            <person name="Saito K."/>
            <person name="Kawai Y."/>
            <person name="Isono Y."/>
            <person name="Nakamura Y."/>
            <person name="Nagahari K."/>
            <person name="Murakami K."/>
            <person name="Yasuda T."/>
            <person name="Iwayanagi T."/>
            <person name="Wagatsuma M."/>
            <person name="Shiratori A."/>
            <person name="Sudo H."/>
            <person name="Hosoiri T."/>
            <person name="Kaku Y."/>
            <person name="Kodaira H."/>
            <person name="Kondo H."/>
            <person name="Sugawara M."/>
            <person name="Takahashi M."/>
            <person name="Kanda K."/>
            <person name="Yokoi T."/>
            <person name="Furuya T."/>
            <person name="Kikkawa E."/>
            <person name="Omura Y."/>
            <person name="Abe K."/>
            <person name="Kamihara K."/>
            <person name="Katsuta N."/>
            <person name="Sato K."/>
            <person name="Tanikawa M."/>
            <person name="Yamazaki M."/>
            <person name="Ninomiya K."/>
            <person name="Ishibashi T."/>
            <person name="Yamashita H."/>
            <person name="Murakawa K."/>
            <person name="Fujimori K."/>
            <person name="Tanai H."/>
            <person name="Kimata M."/>
            <person name="Watanabe M."/>
            <person name="Hiraoka S."/>
            <person name="Chiba Y."/>
            <person name="Ishida S."/>
            <person name="Ono Y."/>
            <person name="Takiguchi S."/>
            <person name="Watanabe S."/>
            <person name="Yosida M."/>
            <person name="Hotuta T."/>
            <person name="Kusano J."/>
            <person name="Kanehori K."/>
            <person name="Takahashi-Fujii A."/>
            <person name="Hara H."/>
            <person name="Tanase T.-O."/>
            <person name="Nomura Y."/>
            <person name="Togiya S."/>
            <person name="Komai F."/>
            <person name="Hara R."/>
            <person name="Takeuchi K."/>
            <person name="Arita M."/>
            <person name="Imose N."/>
            <person name="Musashino K."/>
            <person name="Yuuki H."/>
            <person name="Oshima A."/>
            <person name="Sasaki N."/>
            <person name="Aotsuka S."/>
            <person name="Yoshikawa Y."/>
            <person name="Matsunawa H."/>
            <person name="Ichihara T."/>
            <person name="Shiohata N."/>
            <person name="Sano S."/>
            <person name="Moriya S."/>
            <person name="Momiyama H."/>
            <person name="Satoh N."/>
            <person name="Takami S."/>
            <person name="Terashima Y."/>
            <person name="Suzuki O."/>
            <person name="Nakagawa S."/>
            <person name="Senoh A."/>
            <person name="Mizoguchi H."/>
            <person name="Goto Y."/>
            <person name="Shimizu F."/>
            <person name="Wakebe H."/>
            <person name="Hishigaki H."/>
            <person name="Watanabe T."/>
            <person name="Sugiyama A."/>
            <person name="Takemoto M."/>
            <person name="Kawakami B."/>
            <person name="Yamazaki M."/>
            <person name="Watanabe K."/>
            <person name="Kumagai A."/>
            <person name="Itakura S."/>
            <person name="Fukuzumi Y."/>
            <person name="Fujimori Y."/>
            <person name="Komiyama M."/>
            <person name="Tashiro H."/>
            <person name="Tanigami A."/>
            <person name="Fujiwara T."/>
            <person name="Ono T."/>
            <person name="Yamada K."/>
            <person name="Fujii Y."/>
            <person name="Ozaki K."/>
            <person name="Hirao M."/>
            <person name="Ohmori Y."/>
            <person name="Kawabata A."/>
            <person name="Hikiji T."/>
            <person name="Kobatake N."/>
            <person name="Inagaki H."/>
            <person name="Ikema Y."/>
            <person name="Okamoto S."/>
            <person name="Okitani R."/>
            <person name="Kawakami T."/>
            <person name="Noguchi S."/>
            <person name="Itoh T."/>
            <person name="Shigeta K."/>
            <person name="Senba T."/>
            <person name="Matsumura K."/>
            <person name="Nakajima Y."/>
            <person name="Mizuno T."/>
            <person name="Morinaga M."/>
            <person name="Sasaki M."/>
            <person name="Togashi T."/>
            <person name="Oyama M."/>
            <person name="Hata H."/>
            <person name="Watanabe M."/>
            <person name="Komatsu T."/>
            <person name="Mizushima-Sugano J."/>
            <person name="Satoh T."/>
            <person name="Shirai Y."/>
            <person name="Takahashi Y."/>
            <person name="Nakagawa K."/>
            <person name="Okumura K."/>
            <person name="Nagase T."/>
            <person name="Nomura N."/>
            <person name="Kikuchi H."/>
            <person name="Masuho Y."/>
            <person name="Yamashita R."/>
            <person name="Nakai K."/>
            <person name="Yada T."/>
            <person name="Nakamura Y."/>
            <person name="Ohara O."/>
            <person name="Isogai T."/>
            <person name="Sugano S."/>
        </authorList>
    </citation>
    <scope>NUCLEOTIDE SEQUENCE [LARGE SCALE MRNA] (ISOFORMS 2; 3 AND 5)</scope>
    <source>
        <tissue>Testis</tissue>
        <tissue>Thyroid</tissue>
    </source>
</reference>
<reference key="5">
    <citation type="submission" date="2004-06" db="EMBL/GenBank/DDBJ databases">
        <title>Cloning of human full open reading frames in Gateway(TM) system entry vector (pDONR201).</title>
        <authorList>
            <person name="Ebert L."/>
            <person name="Schick M."/>
            <person name="Neubert P."/>
            <person name="Schatten R."/>
            <person name="Henze S."/>
            <person name="Korn B."/>
        </authorList>
    </citation>
    <scope>NUCLEOTIDE SEQUENCE [LARGE SCALE MRNA] (ISOFORMS 1 AND 4)</scope>
</reference>
<reference key="6">
    <citation type="journal article" date="2008" name="Nat. Methods">
        <title>Human protein factory for converting the transcriptome into an in vitro-expressed proteome.</title>
        <authorList>
            <person name="Goshima N."/>
            <person name="Kawamura Y."/>
            <person name="Fukumoto A."/>
            <person name="Miura A."/>
            <person name="Honma R."/>
            <person name="Satoh R."/>
            <person name="Wakamatsu A."/>
            <person name="Yamamoto J."/>
            <person name="Kimura K."/>
            <person name="Nishikawa T."/>
            <person name="Andoh T."/>
            <person name="Iida Y."/>
            <person name="Ishikawa K."/>
            <person name="Ito E."/>
            <person name="Kagawa N."/>
            <person name="Kaminaga C."/>
            <person name="Kanehori K."/>
            <person name="Kawakami B."/>
            <person name="Kenmochi K."/>
            <person name="Kimura R."/>
            <person name="Kobayashi M."/>
            <person name="Kuroita T."/>
            <person name="Kuwayama H."/>
            <person name="Maruyama Y."/>
            <person name="Matsuo K."/>
            <person name="Minami K."/>
            <person name="Mitsubori M."/>
            <person name="Mori M."/>
            <person name="Morishita R."/>
            <person name="Murase A."/>
            <person name="Nishikawa A."/>
            <person name="Nishikawa S."/>
            <person name="Okamoto T."/>
            <person name="Sakagami N."/>
            <person name="Sakamoto Y."/>
            <person name="Sasaki Y."/>
            <person name="Seki T."/>
            <person name="Sono S."/>
            <person name="Sugiyama A."/>
            <person name="Sumiya T."/>
            <person name="Takayama T."/>
            <person name="Takayama Y."/>
            <person name="Takeda H."/>
            <person name="Togashi T."/>
            <person name="Yahata K."/>
            <person name="Yamada H."/>
            <person name="Yanagisawa Y."/>
            <person name="Endo Y."/>
            <person name="Imamoto F."/>
            <person name="Kisu Y."/>
            <person name="Tanaka S."/>
            <person name="Isogai T."/>
            <person name="Imai J."/>
            <person name="Watanabe S."/>
            <person name="Nomura N."/>
        </authorList>
    </citation>
    <scope>NUCLEOTIDE SEQUENCE [LARGE SCALE MRNA] (ISOFORM 1)</scope>
</reference>
<reference key="7">
    <citation type="journal article" date="2003" name="Nature">
        <title>The DNA sequence and analysis of human chromosome 14.</title>
        <authorList>
            <person name="Heilig R."/>
            <person name="Eckenberg R."/>
            <person name="Petit J.-L."/>
            <person name="Fonknechten N."/>
            <person name="Da Silva C."/>
            <person name="Cattolico L."/>
            <person name="Levy M."/>
            <person name="Barbe V."/>
            <person name="De Berardinis V."/>
            <person name="Ureta-Vidal A."/>
            <person name="Pelletier E."/>
            <person name="Vico V."/>
            <person name="Anthouard V."/>
            <person name="Rowen L."/>
            <person name="Madan A."/>
            <person name="Qin S."/>
            <person name="Sun H."/>
            <person name="Du H."/>
            <person name="Pepin K."/>
            <person name="Artiguenave F."/>
            <person name="Robert C."/>
            <person name="Cruaud C."/>
            <person name="Bruels T."/>
            <person name="Jaillon O."/>
            <person name="Friedlander L."/>
            <person name="Samson G."/>
            <person name="Brottier P."/>
            <person name="Cure S."/>
            <person name="Segurens B."/>
            <person name="Aniere F."/>
            <person name="Samain S."/>
            <person name="Crespeau H."/>
            <person name="Abbasi N."/>
            <person name="Aiach N."/>
            <person name="Boscus D."/>
            <person name="Dickhoff R."/>
            <person name="Dors M."/>
            <person name="Dubois I."/>
            <person name="Friedman C."/>
            <person name="Gouyvenoux M."/>
            <person name="James R."/>
            <person name="Madan A."/>
            <person name="Mairey-Estrada B."/>
            <person name="Mangenot S."/>
            <person name="Martins N."/>
            <person name="Menard M."/>
            <person name="Oztas S."/>
            <person name="Ratcliffe A."/>
            <person name="Shaffer T."/>
            <person name="Trask B."/>
            <person name="Vacherie B."/>
            <person name="Bellemere C."/>
            <person name="Belser C."/>
            <person name="Besnard-Gonnet M."/>
            <person name="Bartol-Mavel D."/>
            <person name="Boutard M."/>
            <person name="Briez-Silla S."/>
            <person name="Combette S."/>
            <person name="Dufosse-Laurent V."/>
            <person name="Ferron C."/>
            <person name="Lechaplais C."/>
            <person name="Louesse C."/>
            <person name="Muselet D."/>
            <person name="Magdelenat G."/>
            <person name="Pateau E."/>
            <person name="Petit E."/>
            <person name="Sirvain-Trukniewicz P."/>
            <person name="Trybou A."/>
            <person name="Vega-Czarny N."/>
            <person name="Bataille E."/>
            <person name="Bluet E."/>
            <person name="Bordelais I."/>
            <person name="Dubois M."/>
            <person name="Dumont C."/>
            <person name="Guerin T."/>
            <person name="Haffray S."/>
            <person name="Hammadi R."/>
            <person name="Muanga J."/>
            <person name="Pellouin V."/>
            <person name="Robert D."/>
            <person name="Wunderle E."/>
            <person name="Gauguet G."/>
            <person name="Roy A."/>
            <person name="Sainte-Marthe L."/>
            <person name="Verdier J."/>
            <person name="Verdier-Discala C."/>
            <person name="Hillier L.W."/>
            <person name="Fulton L."/>
            <person name="McPherson J."/>
            <person name="Matsuda F."/>
            <person name="Wilson R."/>
            <person name="Scarpelli C."/>
            <person name="Gyapay G."/>
            <person name="Wincker P."/>
            <person name="Saurin W."/>
            <person name="Quetier F."/>
            <person name="Waterston R."/>
            <person name="Hood L."/>
            <person name="Weissenbach J."/>
        </authorList>
    </citation>
    <scope>NUCLEOTIDE SEQUENCE [LARGE SCALE GENOMIC DNA]</scope>
</reference>
<reference key="8">
    <citation type="submission" date="2005-09" db="EMBL/GenBank/DDBJ databases">
        <authorList>
            <person name="Mural R.J."/>
            <person name="Istrail S."/>
            <person name="Sutton G.G."/>
            <person name="Florea L."/>
            <person name="Halpern A.L."/>
            <person name="Mobarry C.M."/>
            <person name="Lippert R."/>
            <person name="Walenz B."/>
            <person name="Shatkay H."/>
            <person name="Dew I."/>
            <person name="Miller J.R."/>
            <person name="Flanigan M.J."/>
            <person name="Edwards N.J."/>
            <person name="Bolanos R."/>
            <person name="Fasulo D."/>
            <person name="Halldorsson B.V."/>
            <person name="Hannenhalli S."/>
            <person name="Turner R."/>
            <person name="Yooseph S."/>
            <person name="Lu F."/>
            <person name="Nusskern D.R."/>
            <person name="Shue B.C."/>
            <person name="Zheng X.H."/>
            <person name="Zhong F."/>
            <person name="Delcher A.L."/>
            <person name="Huson D.H."/>
            <person name="Kravitz S.A."/>
            <person name="Mouchard L."/>
            <person name="Reinert K."/>
            <person name="Remington K.A."/>
            <person name="Clark A.G."/>
            <person name="Waterman M.S."/>
            <person name="Eichler E.E."/>
            <person name="Adams M.D."/>
            <person name="Hunkapiller M.W."/>
            <person name="Myers E.W."/>
            <person name="Venter J.C."/>
        </authorList>
    </citation>
    <scope>NUCLEOTIDE SEQUENCE [LARGE SCALE GENOMIC DNA]</scope>
</reference>
<reference key="9">
    <citation type="journal article" date="2004" name="Genome Res.">
        <title>The status, quality, and expansion of the NIH full-length cDNA project: the Mammalian Gene Collection (MGC).</title>
        <authorList>
            <consortium name="The MGC Project Team"/>
        </authorList>
    </citation>
    <scope>NUCLEOTIDE SEQUENCE [LARGE SCALE MRNA] (ISOFORM 1)</scope>
    <source>
        <tissue>Skin</tissue>
    </source>
</reference>
<reference key="10">
    <citation type="journal article" date="2011" name="Sci. Signal.">
        <title>Protein arginine methyltransferase 5 regulates ERK1/2 signal transduction amplitude and cell fate through CRAF.</title>
        <authorList>
            <person name="Andreu-Perez P."/>
            <person name="Esteve-Puig R."/>
            <person name="de Torre-Minguela C."/>
            <person name="Lopez-Fauqued M."/>
            <person name="Bech-Serra J.J."/>
            <person name="Tenbaum S."/>
            <person name="Garcia-Trevijano E.R."/>
            <person name="Canals F."/>
            <person name="Merlino G."/>
            <person name="Avila M.A."/>
            <person name="Recio J.A."/>
        </authorList>
    </citation>
    <scope>PROTEIN SEQUENCE OF 1-13 AND 594-601</scope>
    <scope>FUNCTION IN THE REGULATION OF MAPK1/MAPK3 SIGNALING PATHWAY</scope>
    <scope>INTERACTION WITH BRAF AND RAF1</scope>
    <scope>ACTIVITY REGULATION</scope>
    <scope>SUBCELLULAR LOCATION</scope>
    <scope>MUTAGENESIS OF 365-GLY--GLY-369</scope>
</reference>
<reference key="11">
    <citation type="journal article" date="2003" name="Nat. Biotechnol.">
        <title>Exploring proteomes and analyzing protein processing by mass spectrometric identification of sorted N-terminal peptides.</title>
        <authorList>
            <person name="Gevaert K."/>
            <person name="Goethals M."/>
            <person name="Martens L."/>
            <person name="Van Damme J."/>
            <person name="Staes A."/>
            <person name="Thomas G.R."/>
            <person name="Vandekerckhove J."/>
        </authorList>
    </citation>
    <scope>PROTEIN SEQUENCE OF 2-13</scope>
    <source>
        <tissue>Platelet</tissue>
    </source>
</reference>
<reference key="12">
    <citation type="journal article" date="2002" name="EMBO J.">
        <title>Assisted RNP assembly: SMN and PRMT5 complexes cooperate in the formation of spliceosomal UsnRNPs.</title>
        <authorList>
            <person name="Meister G."/>
            <person name="Fischer U."/>
        </authorList>
    </citation>
    <scope>FUNCTION</scope>
    <scope>SUBUNIT</scope>
</reference>
<reference key="13">
    <citation type="journal article" date="2005" name="Biochem. Biophys. Res. Commun.">
        <title>The tumor suppressor DAL-1/4.1B modulates protein arginine N-methyltransferase 5 activity in a substrate-specific manner.</title>
        <authorList>
            <person name="Jiang W."/>
            <person name="Roemer M.E."/>
            <person name="Newsham I.F."/>
        </authorList>
    </citation>
    <scope>FUNCTION</scope>
    <scope>INTERACTION WITH EPB41L3</scope>
</reference>
<reference key="14">
    <citation type="journal article" date="2005" name="J. Biol. Chem.">
        <title>Toward an assembly line for U7 snRNPs: interactions of U7-specific Lsm proteins with PRMT5 and SMN complexes.</title>
        <authorList>
            <person name="Azzouz T.N."/>
            <person name="Pillai R.S."/>
            <person name="Dapp C."/>
            <person name="Chari A."/>
            <person name="Meister G."/>
            <person name="Kambach C."/>
            <person name="Fischer U."/>
            <person name="Schuemperli D."/>
        </authorList>
    </citation>
    <scope>INTERACTION WITH LSM11</scope>
</reference>
<reference key="15">
    <citation type="submission" date="2008-02" db="UniProtKB">
        <authorList>
            <person name="Bienvenut W.V."/>
            <person name="Calvo F."/>
            <person name="Matallanas D."/>
            <person name="Cooper W.N."/>
            <person name="Kolch W."/>
            <person name="Boldt K."/>
            <person name="von Kriegsheim A.F."/>
        </authorList>
    </citation>
    <scope>PROTEIN SEQUENCE OF 2-13; 19-49; 52-60; 69-95; 155-193; 201-248; 334-343; 349-377; 386-393; 422-428; 459-485 AND 489-526</scope>
    <scope>CLEAVAGE OF INITIATOR METHIONINE</scope>
    <scope>ACETYLATION AT ALA-2</scope>
    <scope>IDENTIFICATION BY MASS SPECTROMETRY</scope>
    <source>
        <tissue>Hepatoma</tissue>
        <tissue>Mammary carcinoma</tissue>
    </source>
</reference>
<reference key="16">
    <citation type="journal article" date="2000" name="J. Biol. Chem.">
        <title>Interaction of the somatostatin receptor subtype 1 with the human homolog of the Shk1 kinase-binding protein from yeast.</title>
        <authorList>
            <person name="Schwaerzler A."/>
            <person name="Kreienkamp H.-J."/>
            <person name="Richter D."/>
        </authorList>
    </citation>
    <scope>INTERACTION WITH SSTR1</scope>
</reference>
<reference key="17">
    <citation type="journal article" date="2001" name="J. Biol. Chem.">
        <title>Prmt5, which forms distinct homo-oligomers, is a member of the protein-arginine methyltransferase family.</title>
        <authorList>
            <person name="Rho J."/>
            <person name="Choi S."/>
            <person name="Seong Y.R."/>
            <person name="Cho W.-K."/>
            <person name="Kim S.H."/>
            <person name="Im D.-S."/>
        </authorList>
    </citation>
    <scope>FUNCTION</scope>
    <scope>SUBUNIT</scope>
</reference>
<reference key="18">
    <citation type="journal article" date="2001" name="Curr. Biol.">
        <title>Methylation of Sm proteins by a complex containing PRMT5 and the putative U snRNP assembly factor pICln.</title>
        <authorList>
            <person name="Meister G."/>
            <person name="Eggert C."/>
            <person name="Buehler D."/>
            <person name="Brahms H."/>
            <person name="Kambach C."/>
            <person name="Fischer U."/>
        </authorList>
    </citation>
    <scope>FUNCTION IN THE METHYLATION AT SNRPD1 AND SNRPD3</scope>
</reference>
<reference key="19">
    <citation type="journal article" date="2002" name="EMBO Rep.">
        <title>Negative regulation of transcription by the type II arginine methyltransferase PRMT5.</title>
        <authorList>
            <person name="Fabbrizio E."/>
            <person name="El Messaoudi S."/>
            <person name="Polanowska J."/>
            <person name="Paul C."/>
            <person name="Cook J.R."/>
            <person name="Lee J.-H."/>
            <person name="Negre V."/>
            <person name="Rousset M."/>
            <person name="Pestka S."/>
            <person name="Le Cam A."/>
            <person name="Sardet C."/>
        </authorList>
    </citation>
    <scope>COMPONENT OF THE CERC COMPLEX</scope>
</reference>
<reference key="20">
    <citation type="journal article" date="2003" name="Mol. Cell">
        <title>Methylation of SPT5 regulates its interaction with RNA polymerase II and transcriptional elongation properties.</title>
        <authorList>
            <person name="Kwak Y.T."/>
            <person name="Guo J."/>
            <person name="Prajapati S."/>
            <person name="Park K.-J."/>
            <person name="Surabhi R.M."/>
            <person name="Miller B."/>
            <person name="Gehrig P."/>
            <person name="Gaynor R.B."/>
        </authorList>
    </citation>
    <scope>FUNCTION</scope>
    <scope>INTERACTION WITH SUPT5H</scope>
</reference>
<reference key="21">
    <citation type="journal article" date="2004" name="Mol. Cell. Biol.">
        <title>Human SWI/SNF-associated PRMT5 methylates histone H3 arginine 8 and negatively regulates expression of ST7 and NM23 tumor suppressor genes.</title>
        <authorList>
            <person name="Pal S."/>
            <person name="Vishwanath S.N."/>
            <person name="Erdjument-Bromage H."/>
            <person name="Tempst P."/>
            <person name="Sif S."/>
        </authorList>
    </citation>
    <scope>INTERACTION WITH THE SWI/SNF COMPLEX</scope>
    <scope>MUTAGENESIS OF 367-GLY-ARG-368</scope>
    <scope>METHYLATION OF HISTONE H3</scope>
</reference>
<reference key="22">
    <citation type="journal article" date="2006" name="Mol. Cell. Biol.">
        <title>MBD2/NuRD and MBD3/NuRD, two distinct complexes with different biochemical and functional properties.</title>
        <authorList>
            <person name="Le Guezennec X."/>
            <person name="Vermeulen M."/>
            <person name="Brinkman A.B."/>
            <person name="Hoeijmakers W.A."/>
            <person name="Cohen A."/>
            <person name="Lasonder E."/>
            <person name="Stunnenberg H.G."/>
        </authorList>
    </citation>
    <scope>FUNCTION</scope>
    <scope>INTERACTION WITH MBD2</scope>
    <scope>IDENTIFICATION BY MASS SPECTROMETRY</scope>
    <scope>SUBCELLULAR LOCATION</scope>
</reference>
<reference key="23">
    <citation type="journal article" date="2007" name="Biochem. Biophys. Res. Commun.">
        <title>A putative transcriptional elongation factor hIws1 is essential for mammalian cell proliferation.</title>
        <authorList>
            <person name="Liu Z."/>
            <person name="Zhou Z."/>
            <person name="Chen G."/>
            <person name="Bao S."/>
        </authorList>
    </citation>
    <scope>INTERACTION WITH IWS1</scope>
</reference>
<reference key="24">
    <citation type="journal article" date="2007" name="J. Cell Biol.">
        <title>Two distinct arginine methyltransferases are required for biogenesis of Sm-class ribonucleoproteins.</title>
        <authorList>
            <person name="Gonsalvez G.B."/>
            <person name="Tian L."/>
            <person name="Ospina J.K."/>
            <person name="Boisvert F.-M."/>
            <person name="Lamond A.I."/>
            <person name="Matera A.G."/>
        </authorList>
    </citation>
    <scope>FUNCTION</scope>
    <scope>INTERACTION WITH PRMT7 AND SNRPD3</scope>
</reference>
<reference key="25">
    <citation type="journal article" date="2008" name="Cell">
        <title>An assembly chaperone collaborates with the SMN complex to generate spliceosomal SnRNPs.</title>
        <authorList>
            <person name="Chari A."/>
            <person name="Golas M.M."/>
            <person name="Klingenhager M."/>
            <person name="Neuenkirchen N."/>
            <person name="Sander B."/>
            <person name="Englbrecht C."/>
            <person name="Sickmann A."/>
            <person name="Stark H."/>
            <person name="Fischer U."/>
        </authorList>
    </citation>
    <scope>IDENTIFICATION IN THE METHYLOSOME COMPLEX</scope>
</reference>
<reference key="26">
    <citation type="journal article" date="2008" name="EMBO Rep.">
        <title>The histone-binding protein COPR5 is required for nuclear functions of the protein arginine methyltransferase PRMT5.</title>
        <authorList>
            <person name="Lacroix M."/>
            <person name="Messaoudi S.E."/>
            <person name="Rodier G."/>
            <person name="Le Cam A."/>
            <person name="Sardet C."/>
            <person name="Fabbrizio E."/>
        </authorList>
    </citation>
    <scope>INTERACTION WITH COPRS</scope>
    <scope>SUBCELLULAR LOCATION</scope>
</reference>
<reference key="27">
    <citation type="journal article" date="2008" name="Nat. Cell Biol.">
        <title>Arginine methylation regulates the p53 response.</title>
        <authorList>
            <person name="Jansson M."/>
            <person name="Durant S.T."/>
            <person name="Cho E.C."/>
            <person name="Sheahan S."/>
            <person name="Edelmann M."/>
            <person name="Kessler B."/>
            <person name="La Thangue N.B."/>
        </authorList>
    </citation>
    <scope>FUNCTION</scope>
    <scope>CATALYTIC ACTIVITY</scope>
    <scope>INTERACTION WITH TTC5 AND TP53</scope>
</reference>
<reference key="28">
    <citation type="journal article" date="2009" name="Anal. Chem.">
        <title>Lys-N and trypsin cover complementary parts of the phosphoproteome in a refined SCX-based approach.</title>
        <authorList>
            <person name="Gauci S."/>
            <person name="Helbig A.O."/>
            <person name="Slijper M."/>
            <person name="Krijgsveld J."/>
            <person name="Heck A.J."/>
            <person name="Mohammed S."/>
        </authorList>
    </citation>
    <scope>ACETYLATION [LARGE SCALE ANALYSIS] AT ALA-2</scope>
    <scope>CLEAVAGE OF INITIATOR METHIONINE [LARGE SCALE ANALYSIS]</scope>
    <scope>IDENTIFICATION BY MASS SPECTROMETRY [LARGE SCALE ANALYSIS]</scope>
</reference>
<reference key="29">
    <citation type="journal article" date="2010" name="Cell Res.">
        <title>PRMT5 regulates Golgi apparatus structure through methylation of the golgin GM130.</title>
        <authorList>
            <person name="Zhou Z."/>
            <person name="Sun X."/>
            <person name="Zou Z."/>
            <person name="Sun L."/>
            <person name="Zhang T."/>
            <person name="Guo S."/>
            <person name="Wen Y."/>
            <person name="Liu L."/>
            <person name="Wang Y."/>
            <person name="Qin J."/>
            <person name="Li L."/>
            <person name="Gong W."/>
            <person name="Bao S."/>
        </authorList>
    </citation>
    <scope>FUNCTION</scope>
    <scope>SUBCELLULAR LOCATION</scope>
</reference>
<reference key="30">
    <citation type="journal article" date="2010" name="J. Biol. Chem.">
        <title>Methylation of ribosomal protein S10 by protein-arginine methyltransferase 5 regulates ribosome biogenesis.</title>
        <authorList>
            <person name="Ren J."/>
            <person name="Wang Y."/>
            <person name="Liang Y."/>
            <person name="Zhang Y."/>
            <person name="Bao S."/>
            <person name="Xu Z."/>
        </authorList>
    </citation>
    <scope>FUNCTION</scope>
    <scope>INTERACTION WITH RPS10</scope>
</reference>
<reference key="31">
    <citation type="journal article" date="2010" name="J. Biol. Chem.">
        <title>srGAP2 arginine methylation regulates cell migration and cell spreading through promoting dimerization.</title>
        <authorList>
            <person name="Guo S."/>
            <person name="Bao S."/>
        </authorList>
    </citation>
    <scope>FUNCTION IN CELL MIGRATION</scope>
    <scope>INTERACTION WITH SRGAP2</scope>
</reference>
<reference key="32">
    <citation type="journal article" date="2011" name="BMC Syst. Biol.">
        <title>Initial characterization of the human central proteome.</title>
        <authorList>
            <person name="Burkard T.R."/>
            <person name="Planyavsky M."/>
            <person name="Kaupe I."/>
            <person name="Breitwieser F.P."/>
            <person name="Buerckstuemmer T."/>
            <person name="Bennett K.L."/>
            <person name="Superti-Furga G."/>
            <person name="Colinge J."/>
        </authorList>
    </citation>
    <scope>IDENTIFICATION BY MASS SPECTROMETRY [LARGE SCALE ANALYSIS]</scope>
</reference>
<reference key="33">
    <citation type="journal article" date="2011" name="J. Biol. Chem.">
        <title>RioK1, a new interactor of protein arginine methyltransferase 5 (PRMT5), competes with pICln for binding and modulates PRMT5 complex composition and substrate specificity.</title>
        <authorList>
            <person name="Guderian G."/>
            <person name="Peter C."/>
            <person name="Wiesner J."/>
            <person name="Sickmann A."/>
            <person name="Schulze-Osthoff K."/>
            <person name="Fischer U."/>
            <person name="Grimmler M."/>
        </authorList>
    </citation>
    <scope>SUBUNIT</scope>
    <scope>SUBCELLULAR LOCATION</scope>
    <scope>INTERACTION WITH RIOK1 AND CLNS1A</scope>
    <scope>IDENTIFICATION IN A COMPLEX WITH PRTM5; WDR77; RIOK1 OR CLNS1A</scope>
    <scope>IDENTIFICATION BY MASS SPECTROMETRY</scope>
</reference>
<reference key="34">
    <citation type="journal article" date="2011" name="Nat. Cell Biol.">
        <title>Crosstalk between Arg 1175 methylation and Tyr 1173 phosphorylation negatively modulates EGFR-mediated ERK activation.</title>
        <authorList>
            <person name="Hsu J.M."/>
            <person name="Chen C.T."/>
            <person name="Chou C.K."/>
            <person name="Kuo H.P."/>
            <person name="Li L.Y."/>
            <person name="Lin C.Y."/>
            <person name="Lee H.J."/>
            <person name="Wang Y.N."/>
            <person name="Liu M."/>
            <person name="Liao H.W."/>
            <person name="Shi B."/>
            <person name="Lai C.C."/>
            <person name="Bedford M.T."/>
            <person name="Tsai C.H."/>
            <person name="Hung M.C."/>
        </authorList>
    </citation>
    <scope>FUNCTION IN EGFR SIGNALING</scope>
    <scope>FUNCTION IN EGFR METHYLATION</scope>
    <scope>INTERACTION WITH EGFR</scope>
</reference>
<reference key="35">
    <citation type="journal article" date="2012" name="Mol. Cell. Biol.">
        <title>HOXA9 methylation by PRMT5 is essential for endothelial cell expression of leukocyte adhesion molecules.</title>
        <authorList>
            <person name="Bandyopadhyay S."/>
            <person name="Harris D.P."/>
            <person name="Adams G.N."/>
            <person name="Lause G.E."/>
            <person name="McHugh A."/>
            <person name="Tillmaand E.G."/>
            <person name="Money A."/>
            <person name="Willard B."/>
            <person name="Fox P.L."/>
            <person name="Dicorleto P.E."/>
        </authorList>
    </citation>
    <scope>FUNCTION</scope>
    <scope>SUBCELLULAR LOCATION</scope>
    <scope>INTERACTION WITH HOXA9</scope>
</reference>
<reference key="36">
    <citation type="journal article" date="2012" name="Mol. Cell. Proteomics">
        <title>Comparative large-scale characterisation of plant vs. mammal proteins reveals similar and idiosyncratic N-alpha acetylation features.</title>
        <authorList>
            <person name="Bienvenut W.V."/>
            <person name="Sumpton D."/>
            <person name="Martinez A."/>
            <person name="Lilla S."/>
            <person name="Espagne C."/>
            <person name="Meinnel T."/>
            <person name="Giglione C."/>
        </authorList>
    </citation>
    <scope>ACETYLATION [LARGE SCALE ANALYSIS] AT ALA-2</scope>
    <scope>CLEAVAGE OF INITIATOR METHIONINE [LARGE SCALE ANALYSIS]</scope>
    <scope>IDENTIFICATION BY MASS SPECTROMETRY [LARGE SCALE ANALYSIS]</scope>
</reference>
<reference key="37">
    <citation type="journal article" date="2012" name="Proc. Natl. Acad. Sci. U.S.A.">
        <title>N-terminal acetylome analyses and functional insights of the N-terminal acetyltransferase NatB.</title>
        <authorList>
            <person name="Van Damme P."/>
            <person name="Lasa M."/>
            <person name="Polevoda B."/>
            <person name="Gazquez C."/>
            <person name="Elosegui-Artola A."/>
            <person name="Kim D.S."/>
            <person name="De Juan-Pardo E."/>
            <person name="Demeyer K."/>
            <person name="Hole K."/>
            <person name="Larrea E."/>
            <person name="Timmerman E."/>
            <person name="Prieto J."/>
            <person name="Arnesen T."/>
            <person name="Sherman F."/>
            <person name="Gevaert K."/>
            <person name="Aldabe R."/>
        </authorList>
    </citation>
    <scope>ACETYLATION [LARGE SCALE ANALYSIS] AT ALA-2</scope>
    <scope>CLEAVAGE OF INITIATOR METHIONINE [LARGE SCALE ANALYSIS]</scope>
    <scope>IDENTIFICATION BY MASS SPECTROMETRY [LARGE SCALE ANALYSIS]</scope>
</reference>
<reference key="38">
    <citation type="journal article" date="2014" name="Cell Rep.">
        <title>5-Hydroxymethylcytosine plays a critical role in glioblastomagenesis by recruiting the CHTOP-methylosome complex.</title>
        <authorList>
            <person name="Takai H."/>
            <person name="Masuda K."/>
            <person name="Sato T."/>
            <person name="Sakaguchi Y."/>
            <person name="Suzuki T."/>
            <person name="Suzuki T."/>
            <person name="Koyama-Nasu R."/>
            <person name="Nasu-Nishimura Y."/>
            <person name="Katou Y."/>
            <person name="Ogawa H."/>
            <person name="Morishita Y."/>
            <person name="Kozuka-Hata H."/>
            <person name="Oyama M."/>
            <person name="Todo T."/>
            <person name="Ino Y."/>
            <person name="Mukasa A."/>
            <person name="Saito N."/>
            <person name="Toyoshima C."/>
            <person name="Shirahige K."/>
            <person name="Akiyama T."/>
        </authorList>
    </citation>
    <scope>FUNCTION</scope>
    <scope>INTERACTION WITH CHTOP</scope>
    <scope>IDENTIFICATION IN THE METHYLOSOME COMPLEX WITH PRMT1 AND ERH</scope>
</reference>
<reference key="39">
    <citation type="journal article" date="2014" name="Nucleic Acids Res.">
        <title>Human fetal globin gene expression is regulated by LYAR.</title>
        <authorList>
            <person name="Ju J."/>
            <person name="Wang Y."/>
            <person name="Liu R."/>
            <person name="Zhang Y."/>
            <person name="Xu Z."/>
            <person name="Wang Y."/>
            <person name="Wu Y."/>
            <person name="Liu M."/>
            <person name="Cerruti L."/>
            <person name="Zou F."/>
            <person name="Ma C."/>
            <person name="Fang M."/>
            <person name="Tan R."/>
            <person name="Jane S.M."/>
            <person name="Zhao Q."/>
        </authorList>
    </citation>
    <scope>FUNCTION</scope>
    <scope>INTERACTION WITH LYAR</scope>
</reference>
<reference key="40">
    <citation type="journal article" date="2016" name="Nature">
        <title>SMN and symmetric arginine dimethylation of RNA polymerase II C-terminal domain control termination.</title>
        <authorList>
            <person name="Yanling Zhao D."/>
            <person name="Gish G."/>
            <person name="Braunschweig U."/>
            <person name="Li Y."/>
            <person name="Ni Z."/>
            <person name="Schmitges F.W."/>
            <person name="Zhong G."/>
            <person name="Liu K."/>
            <person name="Li W."/>
            <person name="Moffat J."/>
            <person name="Vedadi M."/>
            <person name="Min J."/>
            <person name="Pawson T.J."/>
            <person name="Blencowe B.J."/>
            <person name="Greenblatt J.F."/>
        </authorList>
    </citation>
    <scope>FUNCTION</scope>
    <scope>INTERACTION WITH POLR2A AND SMN1</scope>
</reference>
<reference key="41">
    <citation type="journal article" date="2021" name="Life. Sci Alliance">
        <title>The uncharacterized protein FAM47E interacts with PRMT5 and regulates its functions.</title>
        <authorList>
            <person name="Chakrapani B."/>
            <person name="Khan M.I.K."/>
            <person name="Kadumuri R.V."/>
            <person name="Gupta S."/>
            <person name="Verma M."/>
            <person name="Awasthi S."/>
            <person name="Govindaraju G."/>
            <person name="Mahesh A."/>
            <person name="Rajavelu A."/>
            <person name="Chavali S."/>
            <person name="Dhayalan A."/>
        </authorList>
    </citation>
    <scope>INTERACTION WITH FAM47E; WDR77 AND STUB1</scope>
    <scope>SUBCELLULAR LOCATION</scope>
</reference>
<reference evidence="38" key="42">
    <citation type="journal article" date="2012" name="Proc. Natl. Acad. Sci. U.S.A.">
        <title>Crystal structure of the human PRMT5:MEP50 complex.</title>
        <authorList>
            <person name="Antonysamy S."/>
            <person name="Bonday Z."/>
            <person name="Campbell R.M."/>
            <person name="Doyle B."/>
            <person name="Druzina Z."/>
            <person name="Gheyi T."/>
            <person name="Han B."/>
            <person name="Jungheim L.N."/>
            <person name="Qian Y."/>
            <person name="Rauch C."/>
            <person name="Russell M."/>
            <person name="Sauder J.M."/>
            <person name="Wasserman S.R."/>
            <person name="Weichert K."/>
            <person name="Willard F.S."/>
            <person name="Zhang A."/>
            <person name="Emtage S."/>
        </authorList>
    </citation>
    <scope>X-RAY CRYSTALLOGRAPHY (2.06 ANGSTROMS) IN COMPLEX WITH WDR77; S-ADENOSYLMETHIONINE ANALOG AND HISTONE H4 PEPTIDE</scope>
    <scope>CATALYTIC ACTIVITY</scope>
    <scope>ACTIVE SITE</scope>
    <scope>SUBSTRATE-BINDING SITES</scope>
    <scope>SUBUNIT</scope>
</reference>
<accession>O14744</accession>
<accession>A8MTP3</accession>
<accession>A8MZ91</accession>
<accession>B4DX49</accession>
<accession>B4DY30</accession>
<accession>B5BU10</accession>
<accession>D3DS33</accession>
<accession>E2QRE7</accession>
<accession>Q6IBR1</accession>
<accession>Q9UKH1</accession>
<keyword id="KW-0002">3D-structure</keyword>
<keyword id="KW-0007">Acetylation</keyword>
<keyword id="KW-0025">Alternative splicing</keyword>
<keyword id="KW-0090">Biological rhythms</keyword>
<keyword id="KW-0156">Chromatin regulator</keyword>
<keyword id="KW-0158">Chromosome</keyword>
<keyword id="KW-0963">Cytoplasm</keyword>
<keyword id="KW-0903">Direct protein sequencing</keyword>
<keyword id="KW-0333">Golgi apparatus</keyword>
<keyword id="KW-0489">Methyltransferase</keyword>
<keyword id="KW-0539">Nucleus</keyword>
<keyword id="KW-1267">Proteomics identification</keyword>
<keyword id="KW-1185">Reference proteome</keyword>
<keyword id="KW-0678">Repressor</keyword>
<keyword id="KW-0949">S-adenosyl-L-methionine</keyword>
<keyword id="KW-0804">Transcription</keyword>
<keyword id="KW-0805">Transcription regulation</keyword>
<keyword id="KW-0808">Transferase</keyword>
<organism>
    <name type="scientific">Homo sapiens</name>
    <name type="common">Human</name>
    <dbReference type="NCBI Taxonomy" id="9606"/>
    <lineage>
        <taxon>Eukaryota</taxon>
        <taxon>Metazoa</taxon>
        <taxon>Chordata</taxon>
        <taxon>Craniata</taxon>
        <taxon>Vertebrata</taxon>
        <taxon>Euteleostomi</taxon>
        <taxon>Mammalia</taxon>
        <taxon>Eutheria</taxon>
        <taxon>Euarchontoglires</taxon>
        <taxon>Primates</taxon>
        <taxon>Haplorrhini</taxon>
        <taxon>Catarrhini</taxon>
        <taxon>Hominidae</taxon>
        <taxon>Homo</taxon>
    </lineage>
</organism>
<gene>
    <name type="primary">PRMT5</name>
    <name type="synonym">HRMT1L5</name>
    <name type="synonym">IBP72</name>
    <name type="synonym">JBP1</name>
    <name type="synonym">SKB1</name>
</gene>